<organism>
    <name type="scientific">Homo sapiens</name>
    <name type="common">Human</name>
    <dbReference type="NCBI Taxonomy" id="9606"/>
    <lineage>
        <taxon>Eukaryota</taxon>
        <taxon>Metazoa</taxon>
        <taxon>Chordata</taxon>
        <taxon>Craniata</taxon>
        <taxon>Vertebrata</taxon>
        <taxon>Euteleostomi</taxon>
        <taxon>Mammalia</taxon>
        <taxon>Eutheria</taxon>
        <taxon>Euarchontoglires</taxon>
        <taxon>Primates</taxon>
        <taxon>Haplorrhini</taxon>
        <taxon>Catarrhini</taxon>
        <taxon>Hominidae</taxon>
        <taxon>Homo</taxon>
    </lineage>
</organism>
<protein>
    <recommendedName>
        <fullName>Survival motor neuron protein</fullName>
    </recommendedName>
    <alternativeName>
        <fullName>Component of gems 1</fullName>
    </alternativeName>
    <alternativeName>
        <fullName>Gemin-1</fullName>
    </alternativeName>
</protein>
<comment type="function">
    <text evidence="21 23 29 30 33 36 38 49">The SMN complex catalyzes the assembly of small nuclear ribonucleoproteins (snRNPs), the building blocks of the spliceosome, and thereby plays an important role in the splicing of cellular pre-mRNAs (PubMed:18984161, PubMed:9845364). Most spliceosomal snRNPs contain a common set of Sm proteins SNRPB, SNRPD1, SNRPD2, SNRPD3, SNRPE, SNRPF and SNRPG that assemble in a heptameric protein ring on the Sm site of the small nuclear RNA to form the core snRNP (Sm core) (PubMed:18984161). In the cytosol, the Sm proteins SNRPD1, SNRPD2, SNRPE, SNRPF and SNRPG are trapped in an inactive 6S pICln-Sm complex by the chaperone CLNS1A that controls the assembly of the core snRNP (PubMed:18984161). To assemble core snRNPs, the SMN complex accepts the trapped 5Sm proteins from CLNS1A forming an intermediate (PubMed:18984161). Within the SMN complex, SMN1 acts as a structural backbone and together with GEMIN2 it gathers the Sm complex subunits (PubMed:17178713, PubMed:21816274, PubMed:22101937). Binding of snRNA inside 5Sm ultimately triggers eviction of the SMN complex, thereby allowing binding of SNRPD3 and SNRPB to complete assembly of the core snRNP (PubMed:31799625). Ensures the correct splicing of U12 intron-containing genes that may be important for normal motor and proprioceptive neurons development (PubMed:23063131). Also required for resolving RNA-DNA hybrids created by RNA polymerase II, that form R-loop in transcription terminal regions, an important step in proper transcription termination (PubMed:26700805). May also play a role in the metabolism of small nucleolar ribonucleoprotein (snoRNPs).</text>
</comment>
<comment type="subunit">
    <text evidence="4 7 8 9 10 11 12 13 15 16 19 20 21 22 23 24 25 26 28 29 30 31 32 34 35 36 37 38 47">Homooligomer; may form higher order homooligomers in the dimer to octamer range (PubMed:10500148, PubMed:14715275, PubMed:17178713, PubMed:21816274, PubMed:23022347, PubMed:26092730). Part of the core SMN complex that contains SMN1, GEMIN2/SIP1, DDX20/GEMIN3, GEMIN4, GEMIN5, GEMIN6, GEMIN7, GEMIN8 and STRAP/UNRIP (PubMed:17178713, PubMed:9323129). Part of the SMN-Sm complex that contains SMN1, GEMIN2/SIP1, DDX20/GEMIN3, GEMIN4, GEMIN5, GEMIN6, GEMIN7, GEMIN8, STRAP/UNRIP and the Sm proteins SNRPB, SNRPD1, SNRPD2, SNRPD3, SNRPE, SNRPF and SNRPG (PubMed:12065586, PubMed:18984161). Component of an import snRNP complex composed of KPNB1, RNUT1, SMN1 and ZNF259 (PubMed:12095920). Interacts with DDX20, FBL, NOLA1, RNUT1, SYNCRIP and with several spliceosomal snRNP core Sm proteins, including SNRPB, SNRPD1, SNRPD2, SNRPD3, SNRPE and ILF3 (PubMed:10500148, PubMed:11574476, PubMed:12095920). Interacts with GEMIN2; the interaction is direct (PubMed:10500148, PubMed:17178713, PubMed:21816274, PubMed:22607171, PubMed:23022347, PubMed:26092730, PubMed:31799625). Interacts with GEMIN3; the interaction is direct (PubMed:17178713). Interacts with GEMIN8; the interaction is direct (PubMed:17178713, PubMed:33754639). Interacts with SNRPB; the interaction is direct (PubMed:10500148). Interacts (via Tudor domain) with SNRPD1 (via C-terminus); the interaction is direct (PubMed:10500148, PubMed:11135666). Interacts with SNRPD2; the interaction is direct (PubMed:10500148). Interacts (via Tudor domain) with SNRPD3 (via C-terminus); the interaction is direct (PubMed:10500148, PubMed:11135666, PubMed:12628254, PubMed:22101937). Interacts with SNRPE; the interaction is direct (PubMed:10500148). Interacts with OSTF1, LSM10, LSM11 and RPP20/POP7 (PubMed:11551898, PubMed:12975319, PubMed:14715275, PubMed:16087681). Interacts (via C-terminal region) with ZPR1 (via C-terminal region) (PubMed:11283611). Interacts (via Tudor domain) with COIL (PubMed:11641277). Interacts with SETX; recruits SETX to POLR2A (PubMed:21700224, PubMed:26700805). Interacts with POLR2A (via the C-terminal domain (CTD)) (PubMed:26700805). Interacts with PRMT5 (PubMed:26700805). Interacts with XRN2 (PubMed:26700805). Interacts (via C-terminus) with FMR1 (via C-terminus); the interaction is direct and occurs in a RNA-independent manner (PubMed:18093976). Interacts (via Tudor domain) with SF3B2 ('Arg-508'-methylated form) (PubMed:25737013). Interacts with WRAP53/TCAB1 (PubMed:21072240). Interacts (via Tudor domain) with ELAVL4 in an RNA-independent manner; the interaction is required for localization of ELAVL4 to RNA granules (PubMed:21088113, PubMed:21389246, PubMed:29061699). Interacts with FRG1 (PubMed:17103222).</text>
</comment>
<comment type="subunit">
    <molecule>Isoform SMN-delta7</molecule>
    <text evidence="4">Does not homooligomerize (PubMed:10500148). Does not interact with SNRPB (PubMed:10500148).</text>
</comment>
<comment type="interaction">
    <interactant intactId="EBI-395421">
        <id>Q16637</id>
    </interactant>
    <interactant intactId="EBI-22011868">
        <id>Q6PCB6</id>
        <label>ABHD17C</label>
    </interactant>
    <organismsDiffer>false</organismsDiffer>
    <experiments>3</experiments>
</comment>
<comment type="interaction">
    <interactant intactId="EBI-395421">
        <id>Q16637</id>
    </interactant>
    <interactant intactId="EBI-359248">
        <id>Q96GX9</id>
        <label>APIP</label>
    </interactant>
    <organismsDiffer>false</organismsDiffer>
    <experiments>3</experiments>
</comment>
<comment type="interaction">
    <interactant intactId="EBI-395421">
        <id>Q16637</id>
    </interactant>
    <interactant intactId="EBI-745641">
        <id>Q96DX5</id>
        <label>ASB9</label>
    </interactant>
    <organismsDiffer>false</organismsDiffer>
    <experiments>3</experiments>
</comment>
<comment type="interaction">
    <interactant intactId="EBI-395421">
        <id>Q16637</id>
    </interactant>
    <interactant intactId="EBI-2410266">
        <id>Q8WXF7</id>
        <label>ATL1</label>
    </interactant>
    <organismsDiffer>false</organismsDiffer>
    <experiments>3</experiments>
</comment>
<comment type="interaction">
    <interactant intactId="EBI-395421">
        <id>Q16637</id>
    </interactant>
    <interactant intactId="EBI-465781">
        <id>Q9UL45</id>
        <label>BLOC1S6</label>
    </interactant>
    <organismsDiffer>false</organismsDiffer>
    <experiments>6</experiments>
</comment>
<comment type="interaction">
    <interactant intactId="EBI-395421">
        <id>Q16637</id>
    </interactant>
    <interactant intactId="EBI-358049">
        <id>Q13895</id>
        <label>BYSL</label>
    </interactant>
    <organismsDiffer>false</organismsDiffer>
    <experiments>8</experiments>
</comment>
<comment type="interaction">
    <interactant intactId="EBI-395421">
        <id>Q16637</id>
    </interactant>
    <interactant intactId="EBI-1049648">
        <id>Q96FZ7</id>
        <label>CHMP6</label>
    </interactant>
    <organismsDiffer>false</organismsDiffer>
    <experiments>3</experiments>
</comment>
<comment type="interaction">
    <interactant intactId="EBI-395421">
        <id>Q16637</id>
    </interactant>
    <interactant intactId="EBI-347794">
        <id>Q9Y3Y2</id>
        <label>CHTOP</label>
    </interactant>
    <organismsDiffer>false</organismsDiffer>
    <experiments>3</experiments>
</comment>
<comment type="interaction">
    <interactant intactId="EBI-395421">
        <id>Q16637</id>
    </interactant>
    <interactant intactId="EBI-11984237">
        <id>Q9Y3Y2-3</id>
        <label>CHTOP</label>
    </interactant>
    <organismsDiffer>false</organismsDiffer>
    <experiments>3</experiments>
</comment>
<comment type="interaction">
    <interactant intactId="EBI-395421">
        <id>Q16637</id>
    </interactant>
    <interactant intactId="EBI-945751">
        <id>P38432</id>
        <label>COIL</label>
    </interactant>
    <organismsDiffer>false</organismsDiffer>
    <experiments>4</experiments>
</comment>
<comment type="interaction">
    <interactant intactId="EBI-395421">
        <id>Q16637</id>
    </interactant>
    <interactant intactId="EBI-25830216">
        <id>Q9NR90-2</id>
        <label>DAZ3</label>
    </interactant>
    <organismsDiffer>false</organismsDiffer>
    <experiments>3</experiments>
</comment>
<comment type="interaction">
    <interactant intactId="EBI-395421">
        <id>Q16637</id>
    </interactant>
    <interactant intactId="EBI-347658">
        <id>Q9UHI6</id>
        <label>DDX20</label>
    </interactant>
    <organismsDiffer>false</organismsDiffer>
    <experiments>11</experiments>
</comment>
<comment type="interaction">
    <interactant intactId="EBI-395421">
        <id>Q16637</id>
    </interactant>
    <interactant intactId="EBI-2339219">
        <id>Q08426</id>
        <label>EHHADH</label>
    </interactant>
    <organismsDiffer>false</organismsDiffer>
    <experiments>3</experiments>
</comment>
<comment type="interaction">
    <interactant intactId="EBI-395421">
        <id>Q16637</id>
    </interactant>
    <interactant intactId="EBI-6393536">
        <id>O75616</id>
        <label>ERAL1</label>
    </interactant>
    <organismsDiffer>false</organismsDiffer>
    <experiments>3</experiments>
</comment>
<comment type="interaction">
    <interactant intactId="EBI-395421">
        <id>Q16637</id>
    </interactant>
    <interactant intactId="EBI-10175124">
        <id>Q8IZU0</id>
        <label>FAM9B</label>
    </interactant>
    <organismsDiffer>false</organismsDiffer>
    <experiments>8</experiments>
</comment>
<comment type="interaction">
    <interactant intactId="EBI-395421">
        <id>Q16637</id>
    </interactant>
    <interactant intactId="EBI-396453">
        <id>Q9UHY8</id>
        <label>FEZ2</label>
    </interactant>
    <organismsDiffer>false</organismsDiffer>
    <experiments>3</experiments>
</comment>
<comment type="interaction">
    <interactant intactId="EBI-395421">
        <id>Q16637</id>
    </interactant>
    <interactant intactId="EBI-744935">
        <id>Q9BVV2</id>
        <label>FNDC11</label>
    </interactant>
    <organismsDiffer>false</organismsDiffer>
    <experiments>3</experiments>
</comment>
<comment type="interaction">
    <interactant intactId="EBI-395421">
        <id>Q16637</id>
    </interactant>
    <interactant intactId="EBI-10253815">
        <id>Q6PIV2</id>
        <label>FOXR1</label>
    </interactant>
    <organismsDiffer>false</organismsDiffer>
    <experiments>3</experiments>
</comment>
<comment type="interaction">
    <interactant intactId="EBI-395421">
        <id>Q16637</id>
    </interactant>
    <interactant intactId="EBI-400434">
        <id>P35637</id>
        <label>FUS</label>
    </interactant>
    <organismsDiffer>false</organismsDiffer>
    <experiments>2</experiments>
</comment>
<comment type="interaction">
    <interactant intactId="EBI-395421">
        <id>Q16637</id>
    </interactant>
    <interactant intactId="EBI-10691738">
        <id>P06241-3</id>
        <label>FYN</label>
    </interactant>
    <organismsDiffer>false</organismsDiffer>
    <experiments>3</experiments>
</comment>
<comment type="interaction">
    <interactant intactId="EBI-395421">
        <id>Q16637</id>
    </interactant>
    <interactant intactId="EBI-443648">
        <id>O14893</id>
        <label>GEMIN2</label>
    </interactant>
    <organismsDiffer>false</organismsDiffer>
    <experiments>21</experiments>
</comment>
<comment type="interaction">
    <interactant intactId="EBI-395421">
        <id>Q16637</id>
    </interactant>
    <interactant intactId="EBI-443630">
        <id>Q8TEQ6</id>
        <label>GEMIN5</label>
    </interactant>
    <organismsDiffer>false</organismsDiffer>
    <experiments>8</experiments>
</comment>
<comment type="interaction">
    <interactant intactId="EBI-395421">
        <id>Q16637</id>
    </interactant>
    <interactant intactId="EBI-25845242">
        <id>Q8WVV9-3</id>
        <label>HNRNPLL</label>
    </interactant>
    <organismsDiffer>false</organismsDiffer>
    <experiments>3</experiments>
</comment>
<comment type="interaction">
    <interactant intactId="EBI-395421">
        <id>Q16637</id>
    </interactant>
    <interactant intactId="EBI-1018153">
        <id>Q9BUJ2</id>
        <label>HNRNPUL1</label>
    </interactant>
    <organismsDiffer>false</organismsDiffer>
    <experiments>4</experiments>
</comment>
<comment type="interaction">
    <interactant intactId="EBI-395421">
        <id>Q16637</id>
    </interactant>
    <interactant intactId="EBI-3923226">
        <id>P09017</id>
        <label>HOXC4</label>
    </interactant>
    <organismsDiffer>false</organismsDiffer>
    <experiments>3</experiments>
</comment>
<comment type="interaction">
    <interactant intactId="EBI-395421">
        <id>Q16637</id>
    </interactant>
    <interactant intactId="EBI-21911304">
        <id>Q6DN90-2</id>
        <label>IQSEC1</label>
    </interactant>
    <organismsDiffer>false</organismsDiffer>
    <experiments>3</experiments>
</comment>
<comment type="interaction">
    <interactant intactId="EBI-395421">
        <id>Q16637</id>
    </interactant>
    <interactant intactId="EBI-10220600">
        <id>Q8NA54</id>
        <label>IQUB</label>
    </interactant>
    <organismsDiffer>false</organismsDiffer>
    <experiments>6</experiments>
</comment>
<comment type="interaction">
    <interactant intactId="EBI-395421">
        <id>Q16637</id>
    </interactant>
    <interactant intactId="EBI-15488647">
        <id>Q14974-1</id>
        <label>KPNB1</label>
    </interactant>
    <organismsDiffer>false</organismsDiffer>
    <experiments>2</experiments>
</comment>
<comment type="interaction">
    <interactant intactId="EBI-395421">
        <id>Q16637</id>
    </interactant>
    <interactant intactId="EBI-10241252">
        <id>Q3SY46</id>
        <label>KRTAP13-3</label>
    </interactant>
    <organismsDiffer>false</organismsDiffer>
    <experiments>3</experiments>
</comment>
<comment type="interaction">
    <interactant intactId="EBI-395421">
        <id>Q16637</id>
    </interactant>
    <interactant intactId="EBI-12811111">
        <id>Q8IUB9</id>
        <label>KRTAP19-1</label>
    </interactant>
    <organismsDiffer>false</organismsDiffer>
    <experiments>3</experiments>
</comment>
<comment type="interaction">
    <interactant intactId="EBI-395421">
        <id>Q16637</id>
    </interactant>
    <interactant intactId="EBI-1048945">
        <id>Q3LI72</id>
        <label>KRTAP19-5</label>
    </interactant>
    <organismsDiffer>false</organismsDiffer>
    <experiments>3</experiments>
</comment>
<comment type="interaction">
    <interactant intactId="EBI-395421">
        <id>Q16637</id>
    </interactant>
    <interactant intactId="EBI-12805508">
        <id>Q3LI70</id>
        <label>KRTAP19-6</label>
    </interactant>
    <organismsDiffer>false</organismsDiffer>
    <experiments>3</experiments>
</comment>
<comment type="interaction">
    <interactant intactId="EBI-395421">
        <id>Q16637</id>
    </interactant>
    <interactant intactId="EBI-10241353">
        <id>Q3SYF9</id>
        <label>KRTAP19-7</label>
    </interactant>
    <organismsDiffer>false</organismsDiffer>
    <experiments>6</experiments>
</comment>
<comment type="interaction">
    <interactant intactId="EBI-395421">
        <id>Q16637</id>
    </interactant>
    <interactant intactId="EBI-18395721">
        <id>Q3LI59</id>
        <label>KRTAP21-2</label>
    </interactant>
    <organismsDiffer>false</organismsDiffer>
    <experiments>3</experiments>
</comment>
<comment type="interaction">
    <interactant intactId="EBI-395421">
        <id>Q16637</id>
    </interactant>
    <interactant intactId="EBI-12111050">
        <id>Q3LI64</id>
        <label>KRTAP6-1</label>
    </interactant>
    <organismsDiffer>false</organismsDiffer>
    <experiments>3</experiments>
</comment>
<comment type="interaction">
    <interactant intactId="EBI-395421">
        <id>Q16637</id>
    </interactant>
    <interactant intactId="EBI-11962084">
        <id>Q3LI66</id>
        <label>KRTAP6-2</label>
    </interactant>
    <organismsDiffer>false</organismsDiffer>
    <experiments>5</experiments>
</comment>
<comment type="interaction">
    <interactant intactId="EBI-395421">
        <id>Q16637</id>
    </interactant>
    <interactant intactId="EBI-10261141">
        <id>Q8IUC2</id>
        <label>KRTAP8-1</label>
    </interactant>
    <organismsDiffer>false</organismsDiffer>
    <experiments>3</experiments>
</comment>
<comment type="interaction">
    <interactant intactId="EBI-395421">
        <id>Q16637</id>
    </interactant>
    <interactant intactId="EBI-716006">
        <id>Q9Y5V3</id>
        <label>MAGED1</label>
    </interactant>
    <organismsDiffer>false</organismsDiffer>
    <experiments>3</experiments>
</comment>
<comment type="interaction">
    <interactant intactId="EBI-395421">
        <id>Q16637</id>
    </interactant>
    <interactant intactId="EBI-476263">
        <id>Q99683</id>
        <label>MAP3K5</label>
    </interactant>
    <organismsDiffer>false</organismsDiffer>
    <experiments>3</experiments>
</comment>
<comment type="interaction">
    <interactant intactId="EBI-395421">
        <id>Q16637</id>
    </interactant>
    <interactant intactId="EBI-298304">
        <id>Q15759</id>
        <label>MAPK11</label>
    </interactant>
    <organismsDiffer>false</organismsDiffer>
    <experiments>3</experiments>
</comment>
<comment type="interaction">
    <interactant intactId="EBI-395421">
        <id>Q16637</id>
    </interactant>
    <interactant intactId="EBI-923391">
        <id>Q9UBB5</id>
        <label>MBD2</label>
    </interactant>
    <organismsDiffer>false</organismsDiffer>
    <experiments>2</experiments>
</comment>
<comment type="interaction">
    <interactant intactId="EBI-395421">
        <id>Q16637</id>
    </interactant>
    <interactant intactId="EBI-4397720">
        <id>Q8TDB4</id>
        <label>MGARP</label>
    </interactant>
    <organismsDiffer>false</organismsDiffer>
    <experiments>3</experiments>
</comment>
<comment type="interaction">
    <interactant intactId="EBI-395421">
        <id>Q16637</id>
    </interactant>
    <interactant intactId="EBI-25844576">
        <id>O43196-2</id>
        <label>MSH5</label>
    </interactant>
    <organismsDiffer>false</organismsDiffer>
    <experiments>3</experiments>
</comment>
<comment type="interaction">
    <interactant intactId="EBI-395421">
        <id>Q16637</id>
    </interactant>
    <interactant intactId="EBI-2933200">
        <id>Q9NV92</id>
        <label>NDFIP2</label>
    </interactant>
    <organismsDiffer>false</organismsDiffer>
    <experiments>3</experiments>
</comment>
<comment type="interaction">
    <interactant intactId="EBI-395421">
        <id>Q16637</id>
    </interactant>
    <interactant intactId="EBI-10698339">
        <id>Q9NPJ8-3</id>
        <label>NXT2</label>
    </interactant>
    <organismsDiffer>false</organismsDiffer>
    <experiments>3</experiments>
</comment>
<comment type="interaction">
    <interactant intactId="EBI-395421">
        <id>Q16637</id>
    </interactant>
    <interactant intactId="EBI-629434">
        <id>O75925</id>
        <label>PIAS1</label>
    </interactant>
    <organismsDiffer>false</organismsDiffer>
    <experiments>3</experiments>
</comment>
<comment type="interaction">
    <interactant intactId="EBI-395421">
        <id>Q16637</id>
    </interactant>
    <interactant intactId="EBI-1055079">
        <id>O15160</id>
        <label>POLR1C</label>
    </interactant>
    <organismsDiffer>false</organismsDiffer>
    <experiments>6</experiments>
</comment>
<comment type="interaction">
    <interactant intactId="EBI-395421">
        <id>Q16637</id>
    </interactant>
    <interactant intactId="EBI-295301">
        <id>P24928</id>
        <label>POLR2A</label>
    </interactant>
    <organismsDiffer>false</organismsDiffer>
    <experiments>12</experiments>
</comment>
<comment type="interaction">
    <interactant intactId="EBI-395421">
        <id>Q16637</id>
    </interactant>
    <interactant intactId="EBI-366574">
        <id>O75817</id>
        <label>POP7</label>
    </interactant>
    <organismsDiffer>false</organismsDiffer>
    <experiments>5</experiments>
</comment>
<comment type="interaction">
    <interactant intactId="EBI-395421">
        <id>Q16637</id>
    </interactant>
    <interactant intactId="EBI-396072">
        <id>Q13427</id>
        <label>PPIG</label>
    </interactant>
    <organismsDiffer>false</organismsDiffer>
    <experiments>4</experiments>
</comment>
<comment type="interaction">
    <interactant intactId="EBI-395421">
        <id>Q16637</id>
    </interactant>
    <interactant intactId="EBI-2803203">
        <id>Q86UA1</id>
        <label>PRPF39</label>
    </interactant>
    <organismsDiffer>false</organismsDiffer>
    <experiments>3</experiments>
</comment>
<comment type="interaction">
    <interactant intactId="EBI-395421">
        <id>Q16637</id>
    </interactant>
    <interactant intactId="EBI-6552718">
        <id>P57729</id>
        <label>RAB38</label>
    </interactant>
    <organismsDiffer>false</organismsDiffer>
    <experiments>3</experiments>
</comment>
<comment type="interaction">
    <interactant intactId="EBI-395421">
        <id>Q16637</id>
    </interactant>
    <interactant intactId="EBI-1220123">
        <id>Q7Z333</id>
        <label>SETX</label>
    </interactant>
    <organismsDiffer>false</organismsDiffer>
    <experiments>3</experiments>
</comment>
<comment type="interaction">
    <interactant intactId="EBI-395421">
        <id>Q16637</id>
    </interactant>
    <interactant intactId="EBI-749111">
        <id>Q13435</id>
        <label>SF3B2</label>
    </interactant>
    <organismsDiffer>false</organismsDiffer>
    <experiments>4</experiments>
</comment>
<comment type="interaction">
    <interactant intactId="EBI-395421">
        <id>Q16637</id>
    </interactant>
    <interactant intactId="EBI-10182463">
        <id>Q2NKQ1-4</id>
        <label>SGSM1</label>
    </interactant>
    <organismsDiffer>false</organismsDiffer>
    <experiments>3</experiments>
</comment>
<comment type="interaction">
    <interactant intactId="EBI-395421">
        <id>Q16637</id>
    </interactant>
    <interactant intactId="EBI-358419">
        <id>Q12824</id>
        <label>SMARCB1</label>
    </interactant>
    <organismsDiffer>false</organismsDiffer>
    <experiments>3</experiments>
</comment>
<comment type="interaction">
    <interactant intactId="EBI-395421">
        <id>Q16637</id>
    </interactant>
    <interactant intactId="EBI-395421">
        <id>Q16637</id>
        <label>SMN2</label>
    </interactant>
    <organismsDiffer>false</organismsDiffer>
    <experiments>22</experiments>
</comment>
<comment type="interaction">
    <interactant intactId="EBI-395421">
        <id>Q16637</id>
    </interactant>
    <interactant intactId="EBI-395447">
        <id>Q16637-3</id>
        <label>SMN2</label>
    </interactant>
    <organismsDiffer>false</organismsDiffer>
    <experiments>3</experiments>
</comment>
<comment type="interaction">
    <interactant intactId="EBI-395421">
        <id>Q16637</id>
    </interactant>
    <interactant intactId="EBI-1049228">
        <id>P08621</id>
        <label>SNRNP70</label>
    </interactant>
    <organismsDiffer>false</organismsDiffer>
    <experiments>9</experiments>
</comment>
<comment type="interaction">
    <interactant intactId="EBI-395421">
        <id>Q16637</id>
    </interactant>
    <interactant intactId="EBI-372177">
        <id>P62314</id>
        <label>SNRPD1</label>
    </interactant>
    <organismsDiffer>false</organismsDiffer>
    <experiments>7</experiments>
</comment>
<comment type="interaction">
    <interactant intactId="EBI-395421">
        <id>Q16637</id>
    </interactant>
    <interactant intactId="EBI-712228">
        <id>P55769</id>
        <label>SNU13</label>
    </interactant>
    <organismsDiffer>false</organismsDiffer>
    <experiments>3</experiments>
</comment>
<comment type="interaction">
    <interactant intactId="EBI-395421">
        <id>Q16637</id>
    </interactant>
    <interactant intactId="EBI-1046690">
        <id>O60749</id>
        <label>SNX2</label>
    </interactant>
    <organismsDiffer>false</organismsDiffer>
    <experiments>3</experiments>
</comment>
<comment type="interaction">
    <interactant intactId="EBI-395421">
        <id>Q16637</id>
    </interactant>
    <interactant intactId="EBI-12023934">
        <id>Q5MJ10</id>
        <label>SPANXN2</label>
    </interactant>
    <organismsDiffer>false</organismsDiffer>
    <experiments>3</experiments>
</comment>
<comment type="interaction">
    <interactant intactId="EBI-395421">
        <id>Q16637</id>
    </interactant>
    <interactant intactId="EBI-10696971">
        <id>Q7Z6I5</id>
        <label>SPATA12</label>
    </interactant>
    <organismsDiffer>false</organismsDiffer>
    <experiments>3</experiments>
</comment>
<comment type="interaction">
    <interactant intactId="EBI-395421">
        <id>Q16637</id>
    </interactant>
    <interactant intactId="EBI-1056740">
        <id>P37802</id>
        <label>TAGLN2</label>
    </interactant>
    <organismsDiffer>false</organismsDiffer>
    <experiments>3</experiments>
</comment>
<comment type="interaction">
    <interactant intactId="EBI-395421">
        <id>Q16637</id>
    </interactant>
    <interactant intactId="EBI-21894090">
        <id>Q9NX07-2</id>
        <label>TRNAU1AP</label>
    </interactant>
    <organismsDiffer>false</organismsDiffer>
    <experiments>3</experiments>
</comment>
<comment type="interaction">
    <interactant intactId="EBI-395421">
        <id>Q16637</id>
    </interactant>
    <interactant intactId="EBI-21353855">
        <id>Q99598</id>
        <label>TSNAX</label>
    </interactant>
    <organismsDiffer>false</organismsDiffer>
    <experiments>3</experiments>
</comment>
<comment type="interaction">
    <interactant intactId="EBI-395421">
        <id>Q16637</id>
    </interactant>
    <interactant intactId="EBI-10243107">
        <id>Q548N1</id>
        <label>VPS28</label>
    </interactant>
    <organismsDiffer>false</organismsDiffer>
    <experiments>3</experiments>
</comment>
<comment type="interaction">
    <interactant intactId="EBI-395421">
        <id>Q16637</id>
    </interactant>
    <interactant intactId="EBI-727424">
        <id>Q9UK41</id>
        <label>VPS28</label>
    </interactant>
    <organismsDiffer>false</organismsDiffer>
    <experiments>5</experiments>
</comment>
<comment type="interaction">
    <interactant intactId="EBI-395421">
        <id>Q16637</id>
    </interactant>
    <interactant intactId="EBI-2563542">
        <id>Q9BUR4</id>
        <label>WRAP53</label>
    </interactant>
    <organismsDiffer>false</organismsDiffer>
    <experiments>5</experiments>
</comment>
<comment type="interaction">
    <interactant intactId="EBI-395421">
        <id>Q16637</id>
    </interactant>
    <interactant intactId="EBI-185315">
        <id>Q9VV74</id>
        <label>Smn</label>
    </interactant>
    <organismsDiffer>true</organismsDiffer>
    <experiments>2</experiments>
</comment>
<comment type="interaction">
    <interactant intactId="EBI-395421">
        <id>Q16637</id>
    </interactant>
    <interactant intactId="EBI-20625235">
        <id>A0A142I5B9</id>
    </interactant>
    <organismsDiffer>true</organismsDiffer>
    <experiments>2</experiments>
</comment>
<comment type="interaction">
    <interactant intactId="EBI-16014970">
        <id>Q16637-2</id>
    </interactant>
    <interactant intactId="EBI-443648">
        <id>O14893</id>
        <label>GEMIN2</label>
    </interactant>
    <organismsDiffer>false</organismsDiffer>
    <experiments>4</experiments>
</comment>
<comment type="interaction">
    <interactant intactId="EBI-395447">
        <id>Q16637-3</id>
    </interactant>
    <interactant intactId="EBI-640741">
        <id>P01023</id>
        <label>A2M</label>
    </interactant>
    <organismsDiffer>false</organismsDiffer>
    <experiments>3</experiments>
</comment>
<comment type="interaction">
    <interactant intactId="EBI-395447">
        <id>Q16637-3</id>
    </interactant>
    <interactant intactId="EBI-10968534">
        <id>P50570-2</id>
        <label>DNM2</label>
    </interactant>
    <organismsDiffer>false</organismsDiffer>
    <experiments>3</experiments>
</comment>
<comment type="interaction">
    <interactant intactId="EBI-395447">
        <id>Q16637-3</id>
    </interactant>
    <interactant intactId="EBI-11110431">
        <id>Q8TB36</id>
        <label>GDAP1</label>
    </interactant>
    <organismsDiffer>false</organismsDiffer>
    <experiments>3</experiments>
</comment>
<comment type="interaction">
    <interactant intactId="EBI-395447">
        <id>Q16637-3</id>
    </interactant>
    <interactant intactId="EBI-517086">
        <id>O43464</id>
        <label>HTRA2</label>
    </interactant>
    <organismsDiffer>false</organismsDiffer>
    <experiments>3</experiments>
</comment>
<comment type="interaction">
    <interactant intactId="EBI-395447">
        <id>Q16637-3</id>
    </interactant>
    <interactant intactId="EBI-466029">
        <id>P42858</id>
        <label>HTT</label>
    </interactant>
    <organismsDiffer>false</organismsDiffer>
    <experiments>9</experiments>
</comment>
<comment type="interaction">
    <interactant intactId="EBI-395447">
        <id>Q16637-3</id>
    </interactant>
    <interactant intactId="EBI-286758">
        <id>Q14974</id>
        <label>KPNB1</label>
    </interactant>
    <organismsDiffer>false</organismsDiffer>
    <experiments>5</experiments>
</comment>
<comment type="interaction">
    <interactant intactId="EBI-395447">
        <id>Q16637-3</id>
    </interactant>
    <interactant intactId="EBI-1189067">
        <id>P51608</id>
        <label>MECP2</label>
    </interactant>
    <organismsDiffer>false</organismsDiffer>
    <experiments>3</experiments>
</comment>
<comment type="interaction">
    <interactant intactId="EBI-395447">
        <id>Q16637-3</id>
    </interactant>
    <interactant intactId="EBI-372471">
        <id>P14678-1</id>
        <label>SNRPB</label>
    </interactant>
    <organismsDiffer>false</organismsDiffer>
    <experiments>3</experiments>
</comment>
<comment type="interaction">
    <interactant intactId="EBI-395447">
        <id>Q16637-3</id>
    </interactant>
    <interactant intactId="EBI-727424">
        <id>Q9UK41</id>
        <label>VPS28</label>
    </interactant>
    <organismsDiffer>false</organismsDiffer>
    <experiments>3</experiments>
</comment>
<comment type="subcellular location">
    <subcellularLocation>
        <location evidence="8 43 54">Nucleus</location>
        <location evidence="8 43 54">Gem</location>
    </subcellularLocation>
    <subcellularLocation>
        <location evidence="8 24 54">Nucleus</location>
        <location evidence="8 24 54">Cajal body</location>
    </subcellularLocation>
    <subcellularLocation>
        <location evidence="8 43 54">Cytoplasm</location>
    </subcellularLocation>
    <subcellularLocation>
        <location evidence="16">Cytoplasmic granule</location>
    </subcellularLocation>
    <subcellularLocation>
        <location evidence="22">Perikaryon</location>
    </subcellularLocation>
    <subcellularLocation>
        <location evidence="22">Cell projection</location>
        <location evidence="22">Neuron projection</location>
    </subcellularLocation>
    <subcellularLocation>
        <location evidence="1">Cell projection</location>
        <location evidence="1">Axon</location>
    </subcellularLocation>
    <subcellularLocation>
        <location evidence="1">Cytoplasm</location>
        <location evidence="1">Myofibril</location>
        <location evidence="1">Sarcomere</location>
        <location evidence="1">Z line</location>
    </subcellularLocation>
    <text evidence="1 8 16 22">Colocalizes with actin and at the Z-line of skeletal muscle (By similarity). Under stress conditions colocalizes with RPP20/POP7 in punctuated cytoplasmic granules (PubMed:14715275). Colocalized and redistributed with ZPR1 from the cytoplasm to nuclear gems (Gemini of coiled bodies) and Cajal bodies (PubMed:11283611). Colocalizes with FMR1 in cytoplasmic granules in the soma and neurite cell processes (PubMed:18093976).</text>
</comment>
<comment type="alternative products">
    <event type="alternative splicing"/>
    <isoform>
        <id>Q16637-1</id>
        <name>SMN</name>
        <name>Full-SMN</name>
        <sequence type="displayed"/>
    </isoform>
    <isoform>
        <id>Q16637-2</id>
        <name>SMN-delta5</name>
        <name>Iso5-SMN</name>
        <sequence type="described" ref="VSP_006183"/>
    </isoform>
    <isoform>
        <id>Q16637-3</id>
        <name>SMN-delta7</name>
        <name>Iso7-SMN</name>
        <sequence type="described" ref="VSP_006184 VSP_006185"/>
    </isoform>
    <isoform>
        <id>Q16637-4</id>
        <name>SMN-delta57</name>
        <name>Iso57-SMN</name>
        <sequence type="described" ref="VSP_006183 VSP_006184 VSP_006185"/>
    </isoform>
    <text>Experimental confirmation may be lacking for some isoforms.</text>
</comment>
<comment type="tissue specificity">
    <text evidence="9 46">Expressed in a wide variety of tissues. Expressed at high levels in brain, kidney and liver, moderate levels in skeletal and cardiac muscle, and low levels in fibroblasts and lymphocytes. Also seen at high levels in spinal cord. Present in osteoclasts and mononuclear cells (at protein level).</text>
</comment>
<comment type="domain">
    <text evidence="14 30 36">The Tudor domain mediates association with dimethylarginines, which are common in snRNP proteins.</text>
</comment>
<comment type="disease" evidence="4 6 16 17 18 25 26 30 32 39 41 44">
    <disease id="DI-01055">
        <name>Spinal muscular atrophy 1</name>
        <acronym>SMA1</acronym>
        <description>A form of spinal muscular atrophy, a group of neuromuscular disorder characterized by degeneration of the anterior horn cells of the spinal cord, leading to symmetrical muscle weakness and atrophy. Autosomal recessive forms are classified according to the age of onset, the maximum muscular activity achieved, and survivorship. The severity of the disease is mainly determined by the copy number of SMN2, a copy gene which predominantly produces exon 7-skipped transcripts and only low amount of full-length transcripts that encode for a protein identical to SMN1. Only about 4% of SMA patients bear one SMN1 copy with an intragenic mutation. SMA1 is a severe form, with onset before 6 months of age. SMA1 patients never achieve the ability to sit.</description>
        <dbReference type="MIM" id="253300"/>
    </disease>
    <text>The disease is caused by variants affecting the gene represented in this entry.</text>
</comment>
<comment type="disease" evidence="5 16 25 45 48">
    <disease id="DI-01056">
        <name>Spinal muscular atrophy 2</name>
        <acronym>SMA2</acronym>
        <description>An autosomal recessive form of spinal muscular atrophy, a neuromuscular disorder characterized by degeneration of the anterior horn cells of the spinal cord, leading to symmetrical muscle weakness and atrophy. It has intermediate severity, with onset between 6 and 18 months. Patients do not reach the motor milestone of standing, and survive into adulthood.</description>
        <dbReference type="MIM" id="253550"/>
    </disease>
    <text>The disease is caused by variants affecting the gene represented in this entry.</text>
</comment>
<comment type="disease" evidence="6 16 29 45 48">
    <disease id="DI-01057">
        <name>Spinal muscular atrophy 3</name>
        <acronym>SMA3</acronym>
        <description>An autosomal recessive form of spinal muscular atrophy, a neuromuscular disorder characterized by degeneration of the anterior horn cells of the spinal cord, leading to symmetrical muscle weakness and atrophy. Onset is after 18 months. Patients develop ability to stand and walk and survive into adulthood.</description>
        <dbReference type="MIM" id="253400"/>
    </disease>
    <text>The disease is caused by variants affecting the gene represented in this entry.</text>
</comment>
<comment type="disease" evidence="40 42">
    <disease id="DI-01058">
        <name>Spinal muscular atrophy 4</name>
        <acronym>SMA4</acronym>
        <description>An autosomal recessive form of spinal muscular atrophy, a neuromuscular disorder characterized by degeneration of the anterior horn cells of the spinal cord, leading to symmetrical muscle weakness and atrophy. Onset is in adulthood, disease progression is slow, and patients can stand and walk.</description>
        <dbReference type="MIM" id="271150"/>
    </disease>
    <text>The disease is caused by variants affecting the gene represented in this entry.</text>
</comment>
<comment type="miscellaneous">
    <text>The SMN gene is present in two highly homologous and functional copies (TelSMN/SMN1 and CenSMN/SMN2). The telomeric copy of SMN gene (TelSMN/SMN1) seems to be the SMA-determining gene while the centromeric copy seems unaffected.</text>
</comment>
<comment type="miscellaneous">
    <molecule>Isoform SMN</molecule>
    <text>Primarily derived from SMN1 gene.</text>
</comment>
<comment type="miscellaneous">
    <molecule>Isoform SMN-delta7</molecule>
    <text evidence="53">Thought to be a non-functional protein that lacks the capacity to oligomerize and thus cannot interact with Sm proteins. Primarily derived from SMN2 gene.</text>
</comment>
<comment type="similarity">
    <text evidence="52">Belongs to the SMN family.</text>
</comment>
<keyword id="KW-0002">3D-structure</keyword>
<keyword id="KW-0007">Acetylation</keyword>
<keyword id="KW-0025">Alternative splicing</keyword>
<keyword id="KW-0966">Cell projection</keyword>
<keyword id="KW-0963">Cytoplasm</keyword>
<keyword id="KW-0225">Disease variant</keyword>
<keyword id="KW-1017">Isopeptide bond</keyword>
<keyword id="KW-0507">mRNA processing</keyword>
<keyword id="KW-0508">mRNA splicing</keyword>
<keyword id="KW-0523">Neurodegeneration</keyword>
<keyword id="KW-0524">Neurogenesis</keyword>
<keyword id="KW-0539">Nucleus</keyword>
<keyword id="KW-0597">Phosphoprotein</keyword>
<keyword id="KW-1267">Proteomics identification</keyword>
<keyword id="KW-1185">Reference proteome</keyword>
<keyword id="KW-0694">RNA-binding</keyword>
<keyword id="KW-0832">Ubl conjugation</keyword>
<reference key="1">
    <citation type="journal article" date="1995" name="Cell">
        <title>Identification and characterization of a spinal muscular atrophy-determining gene.</title>
        <authorList>
            <person name="Lefebvre S."/>
            <person name="Buerglen L."/>
            <person name="Reboullet S."/>
            <person name="Clermont O."/>
            <person name="Burlet P."/>
            <person name="Viollet L."/>
            <person name="Benichou B."/>
            <person name="Cruaud C."/>
            <person name="Millasseau P."/>
            <person name="Zeviani M."/>
            <person name="le Paslier D."/>
            <person name="Frezal J."/>
            <person name="Cohen D."/>
            <person name="Weissenbach J."/>
            <person name="Munnich A."/>
            <person name="Melki J."/>
        </authorList>
    </citation>
    <scope>NUCLEOTIDE SEQUENCE [GENOMIC DNA / MRNA]</scope>
    <scope>ALTERNATIVE SPLICING</scope>
    <scope>VARIANT SMA1 CYS-272</scope>
    <source>
        <tissue>Fetal brain</tissue>
    </source>
</reference>
<reference key="2">
    <citation type="journal article" date="1996" name="Genomics">
        <title>Structure and organization of the human survival motor neurone (SMN) gene.</title>
        <authorList>
            <person name="Buerglen L."/>
            <person name="Lefebvre S."/>
            <person name="Clermont O."/>
            <person name="Burlet P."/>
            <person name="Viollet L."/>
            <person name="Cruaud C."/>
            <person name="Munnich A."/>
            <person name="Melki J."/>
        </authorList>
    </citation>
    <scope>NUCLEOTIDE SEQUENCE [GENOMIC DNA]</scope>
</reference>
<reference key="3">
    <citation type="journal article" date="1998" name="Genomics">
        <title>Sequence of a 131-kb region of 5q13.1 containing the spinal muscular atrophy candidate genes SMN and NAIP.</title>
        <authorList>
            <person name="Chen Q."/>
            <person name="Baird S.D."/>
            <person name="Mahadevan M."/>
            <person name="Besner-Johnston A."/>
            <person name="Farahani R."/>
            <person name="Xuan J.-Y."/>
            <person name="Kang X."/>
            <person name="Lefebvre C."/>
            <person name="Ikeda J.-E."/>
            <person name="Korneluk R.G."/>
            <person name="MacKenzie A.E."/>
        </authorList>
    </citation>
    <scope>NUCLEOTIDE SEQUENCE [GENOMIC DNA]</scope>
</reference>
<reference key="4">
    <citation type="journal article" date="1995" name="Biochem. Biophys. Res. Commun.">
        <title>Survival motor neuron gene transcript analysis in muscles from spinal muscular atrophy patients.</title>
        <authorList>
            <person name="Gennarelli M."/>
            <person name="Lucarelli M."/>
            <person name="Capon F."/>
            <person name="Pizzuti A."/>
            <person name="Merlini L."/>
            <person name="Angelini C."/>
            <person name="Novelli G."/>
            <person name="Dallapiccola B."/>
        </authorList>
    </citation>
    <scope>NUCLEOTIDE SEQUENCE [MRNA]</scope>
    <scope>ALTERNATIVE SPLICING</scope>
    <source>
        <tissue>Skeletal muscle</tissue>
    </source>
</reference>
<reference key="5">
    <citation type="journal article" date="2004" name="Nat. Genet.">
        <title>Complete sequencing and characterization of 21,243 full-length human cDNAs.</title>
        <authorList>
            <person name="Ota T."/>
            <person name="Suzuki Y."/>
            <person name="Nishikawa T."/>
            <person name="Otsuki T."/>
            <person name="Sugiyama T."/>
            <person name="Irie R."/>
            <person name="Wakamatsu A."/>
            <person name="Hayashi K."/>
            <person name="Sato H."/>
            <person name="Nagai K."/>
            <person name="Kimura K."/>
            <person name="Makita H."/>
            <person name="Sekine M."/>
            <person name="Obayashi M."/>
            <person name="Nishi T."/>
            <person name="Shibahara T."/>
            <person name="Tanaka T."/>
            <person name="Ishii S."/>
            <person name="Yamamoto J."/>
            <person name="Saito K."/>
            <person name="Kawai Y."/>
            <person name="Isono Y."/>
            <person name="Nakamura Y."/>
            <person name="Nagahari K."/>
            <person name="Murakami K."/>
            <person name="Yasuda T."/>
            <person name="Iwayanagi T."/>
            <person name="Wagatsuma M."/>
            <person name="Shiratori A."/>
            <person name="Sudo H."/>
            <person name="Hosoiri T."/>
            <person name="Kaku Y."/>
            <person name="Kodaira H."/>
            <person name="Kondo H."/>
            <person name="Sugawara M."/>
            <person name="Takahashi M."/>
            <person name="Kanda K."/>
            <person name="Yokoi T."/>
            <person name="Furuya T."/>
            <person name="Kikkawa E."/>
            <person name="Omura Y."/>
            <person name="Abe K."/>
            <person name="Kamihara K."/>
            <person name="Katsuta N."/>
            <person name="Sato K."/>
            <person name="Tanikawa M."/>
            <person name="Yamazaki M."/>
            <person name="Ninomiya K."/>
            <person name="Ishibashi T."/>
            <person name="Yamashita H."/>
            <person name="Murakawa K."/>
            <person name="Fujimori K."/>
            <person name="Tanai H."/>
            <person name="Kimata M."/>
            <person name="Watanabe M."/>
            <person name="Hiraoka S."/>
            <person name="Chiba Y."/>
            <person name="Ishida S."/>
            <person name="Ono Y."/>
            <person name="Takiguchi S."/>
            <person name="Watanabe S."/>
            <person name="Yosida M."/>
            <person name="Hotuta T."/>
            <person name="Kusano J."/>
            <person name="Kanehori K."/>
            <person name="Takahashi-Fujii A."/>
            <person name="Hara H."/>
            <person name="Tanase T.-O."/>
            <person name="Nomura Y."/>
            <person name="Togiya S."/>
            <person name="Komai F."/>
            <person name="Hara R."/>
            <person name="Takeuchi K."/>
            <person name="Arita M."/>
            <person name="Imose N."/>
            <person name="Musashino K."/>
            <person name="Yuuki H."/>
            <person name="Oshima A."/>
            <person name="Sasaki N."/>
            <person name="Aotsuka S."/>
            <person name="Yoshikawa Y."/>
            <person name="Matsunawa H."/>
            <person name="Ichihara T."/>
            <person name="Shiohata N."/>
            <person name="Sano S."/>
            <person name="Moriya S."/>
            <person name="Momiyama H."/>
            <person name="Satoh N."/>
            <person name="Takami S."/>
            <person name="Terashima Y."/>
            <person name="Suzuki O."/>
            <person name="Nakagawa S."/>
            <person name="Senoh A."/>
            <person name="Mizoguchi H."/>
            <person name="Goto Y."/>
            <person name="Shimizu F."/>
            <person name="Wakebe H."/>
            <person name="Hishigaki H."/>
            <person name="Watanabe T."/>
            <person name="Sugiyama A."/>
            <person name="Takemoto M."/>
            <person name="Kawakami B."/>
            <person name="Yamazaki M."/>
            <person name="Watanabe K."/>
            <person name="Kumagai A."/>
            <person name="Itakura S."/>
            <person name="Fukuzumi Y."/>
            <person name="Fujimori Y."/>
            <person name="Komiyama M."/>
            <person name="Tashiro H."/>
            <person name="Tanigami A."/>
            <person name="Fujiwara T."/>
            <person name="Ono T."/>
            <person name="Yamada K."/>
            <person name="Fujii Y."/>
            <person name="Ozaki K."/>
            <person name="Hirao M."/>
            <person name="Ohmori Y."/>
            <person name="Kawabata A."/>
            <person name="Hikiji T."/>
            <person name="Kobatake N."/>
            <person name="Inagaki H."/>
            <person name="Ikema Y."/>
            <person name="Okamoto S."/>
            <person name="Okitani R."/>
            <person name="Kawakami T."/>
            <person name="Noguchi S."/>
            <person name="Itoh T."/>
            <person name="Shigeta K."/>
            <person name="Senba T."/>
            <person name="Matsumura K."/>
            <person name="Nakajima Y."/>
            <person name="Mizuno T."/>
            <person name="Morinaga M."/>
            <person name="Sasaki M."/>
            <person name="Togashi T."/>
            <person name="Oyama M."/>
            <person name="Hata H."/>
            <person name="Watanabe M."/>
            <person name="Komatsu T."/>
            <person name="Mizushima-Sugano J."/>
            <person name="Satoh T."/>
            <person name="Shirai Y."/>
            <person name="Takahashi Y."/>
            <person name="Nakagawa K."/>
            <person name="Okumura K."/>
            <person name="Nagase T."/>
            <person name="Nomura N."/>
            <person name="Kikuchi H."/>
            <person name="Masuho Y."/>
            <person name="Yamashita R."/>
            <person name="Nakai K."/>
            <person name="Yada T."/>
            <person name="Nakamura Y."/>
            <person name="Ohara O."/>
            <person name="Isogai T."/>
            <person name="Sugano S."/>
        </authorList>
    </citation>
    <scope>NUCLEOTIDE SEQUENCE [LARGE SCALE MRNA] (ISOFORM SMN-DELTA7)</scope>
    <source>
        <tissue>Amygdala</tissue>
    </source>
</reference>
<reference key="6">
    <citation type="journal article" date="2004" name="Nature">
        <title>The DNA sequence and comparative analysis of human chromosome 5.</title>
        <authorList>
            <person name="Schmutz J."/>
            <person name="Martin J."/>
            <person name="Terry A."/>
            <person name="Couronne O."/>
            <person name="Grimwood J."/>
            <person name="Lowry S."/>
            <person name="Gordon L.A."/>
            <person name="Scott D."/>
            <person name="Xie G."/>
            <person name="Huang W."/>
            <person name="Hellsten U."/>
            <person name="Tran-Gyamfi M."/>
            <person name="She X."/>
            <person name="Prabhakar S."/>
            <person name="Aerts A."/>
            <person name="Altherr M."/>
            <person name="Bajorek E."/>
            <person name="Black S."/>
            <person name="Branscomb E."/>
            <person name="Caoile C."/>
            <person name="Challacombe J.F."/>
            <person name="Chan Y.M."/>
            <person name="Denys M."/>
            <person name="Detter J.C."/>
            <person name="Escobar J."/>
            <person name="Flowers D."/>
            <person name="Fotopulos D."/>
            <person name="Glavina T."/>
            <person name="Gomez M."/>
            <person name="Gonzales E."/>
            <person name="Goodstein D."/>
            <person name="Grigoriev I."/>
            <person name="Groza M."/>
            <person name="Hammon N."/>
            <person name="Hawkins T."/>
            <person name="Haydu L."/>
            <person name="Israni S."/>
            <person name="Jett J."/>
            <person name="Kadner K."/>
            <person name="Kimball H."/>
            <person name="Kobayashi A."/>
            <person name="Lopez F."/>
            <person name="Lou Y."/>
            <person name="Martinez D."/>
            <person name="Medina C."/>
            <person name="Morgan J."/>
            <person name="Nandkeshwar R."/>
            <person name="Noonan J.P."/>
            <person name="Pitluck S."/>
            <person name="Pollard M."/>
            <person name="Predki P."/>
            <person name="Priest J."/>
            <person name="Ramirez L."/>
            <person name="Retterer J."/>
            <person name="Rodriguez A."/>
            <person name="Rogers S."/>
            <person name="Salamov A."/>
            <person name="Salazar A."/>
            <person name="Thayer N."/>
            <person name="Tice H."/>
            <person name="Tsai M."/>
            <person name="Ustaszewska A."/>
            <person name="Vo N."/>
            <person name="Wheeler J."/>
            <person name="Wu K."/>
            <person name="Yang J."/>
            <person name="Dickson M."/>
            <person name="Cheng J.-F."/>
            <person name="Eichler E.E."/>
            <person name="Olsen A."/>
            <person name="Pennacchio L.A."/>
            <person name="Rokhsar D.S."/>
            <person name="Richardson P."/>
            <person name="Lucas S.M."/>
            <person name="Myers R.M."/>
            <person name="Rubin E.M."/>
        </authorList>
    </citation>
    <scope>NUCLEOTIDE SEQUENCE [LARGE SCALE GENOMIC DNA]</scope>
</reference>
<reference key="7">
    <citation type="journal article" date="2004" name="Genome Res.">
        <title>The status, quality, and expansion of the NIH full-length cDNA project: the Mammalian Gene Collection (MGC).</title>
        <authorList>
            <consortium name="The MGC Project Team"/>
        </authorList>
    </citation>
    <scope>NUCLEOTIDE SEQUENCE [LARGE SCALE MRNA] (ISOFORMS SMN AND SMN-DELTA7)</scope>
    <source>
        <tissue>Kidney</tissue>
        <tissue>Lung</tissue>
        <tissue>Placenta</tissue>
        <tissue>Prostate</tissue>
    </source>
</reference>
<reference key="8">
    <citation type="journal article" date="1995" name="Eur. J. Hum. Genet.">
        <title>A provisional transcript map of the spinal muscular atrophy (SMA) critical region.</title>
        <authorList>
            <person name="van der Steege G."/>
            <person name="Draaijers T.G."/>
            <person name="Grootscholten P.M."/>
            <person name="Osinga J."/>
            <person name="Anzevino R."/>
            <person name="Velona I."/>
            <person name="Den Dunnen J.T."/>
            <person name="Scheffer H."/>
            <person name="Brahe C."/>
            <person name="van Ommen G.J.B."/>
            <person name="Buys C.H.C.M."/>
        </authorList>
    </citation>
    <scope>NUCLEOTIDE SEQUENCE [MRNA] OF 2-294</scope>
</reference>
<reference key="9">
    <citation type="journal article" date="1995" name="Lancet">
        <title>Genetic homogeneity between childhood-onset and adult-onset autosomal recessive spinal muscular atrophy.</title>
        <authorList>
            <person name="Brahe C."/>
            <person name="Servidei S."/>
            <person name="Zappata S."/>
            <person name="Ricci E."/>
            <person name="Tonali P."/>
            <person name="Neri G."/>
        </authorList>
    </citation>
    <scope>INVOLVEMENT IN SMA4</scope>
</reference>
<reference key="10">
    <citation type="journal article" date="1995" name="Lancet">
        <title>SMN gene deletions in adult-onset spinal muscular atrophy.</title>
        <authorList>
            <person name="Clermont O."/>
            <person name="Burlet P."/>
            <person name="Lefebvre S."/>
            <person name="Buerglen L."/>
            <person name="Munnich A."/>
            <person name="Melki J."/>
        </authorList>
    </citation>
    <scope>INVOLVEMENT IN SMA4</scope>
</reference>
<reference key="11">
    <citation type="journal article" date="1996" name="EMBO J.">
        <title>A novel nuclear structure containing the survival of motor neurons protein.</title>
        <authorList>
            <person name="Liu Q."/>
            <person name="Dreyfuss G."/>
        </authorList>
    </citation>
    <scope>SUBCELLULAR LOCATION</scope>
</reference>
<reference key="12">
    <citation type="journal article" date="1997" name="Hum. Mol. Genet.">
        <title>The survival motor neuron protein in spinal muscular atrophy.</title>
        <authorList>
            <person name="Coovert D.D."/>
            <person name="Le T.T."/>
            <person name="McAndrew P.E."/>
            <person name="Strasswimmer J."/>
            <person name="Crawford T.O."/>
            <person name="Mendell J.R."/>
            <person name="Coulson S.E."/>
            <person name="Androphy E.J."/>
            <person name="Prior T.W."/>
            <person name="Burghes A.H.M."/>
        </authorList>
    </citation>
    <scope>TISSUE SPECIFICITY</scope>
</reference>
<reference key="13">
    <citation type="journal article" date="1997" name="Cell">
        <title>The spinal muscular atrophy disease gene product, SMN, and its associated protein SIP1 are in a complex with spliceosomal snRNP proteins.</title>
        <authorList>
            <person name="Liu Q."/>
            <person name="Fischer U."/>
            <person name="Wang F."/>
            <person name="Dreyfuss G."/>
        </authorList>
    </citation>
    <scope>INTERACTION WITH GEMIN2</scope>
</reference>
<reference key="14">
    <citation type="journal article" date="1998" name="Cell">
        <title>A novel function for SMN, the spinal muscular atrophy disease gene product, in pre-mRNA splicing.</title>
        <authorList>
            <person name="Pellizzoni L."/>
            <person name="Kataoka N."/>
            <person name="Charroux B."/>
            <person name="Dreyfuss G."/>
        </authorList>
    </citation>
    <scope>FUNCTION IN U12 INTRONS SPLICING</scope>
</reference>
<reference key="15">
    <citation type="journal article" date="2001" name="EMBO J.">
        <title>SMN interacts with a novel family of hnRNP and spliceosomal proteins.</title>
        <authorList>
            <person name="Mourelatos Z."/>
            <person name="Abel L."/>
            <person name="Yong J."/>
            <person name="Kataoka N."/>
            <person name="Dreyfuss G."/>
        </authorList>
    </citation>
    <scope>INTERACTION WITH SYNCRIP</scope>
</reference>
<reference key="16">
    <citation type="journal article" date="2001" name="Genes Dev.">
        <title>Coilin forms the bridge between Cajal bodies and SMN, the spinal muscular atrophy protein.</title>
        <authorList>
            <person name="Hebert M.D."/>
            <person name="Szymczyk P.W."/>
            <person name="Shpargel K.B."/>
            <person name="Matera A.G."/>
        </authorList>
    </citation>
    <scope>INTERACTION WITH COIL</scope>
</reference>
<reference key="17">
    <citation type="journal article" date="2001" name="J. Biol. Chem.">
        <title>Osteoclast-stimulating factor interacts with the spinal muscular atrophy gene product to stimulate osteoclast formation.</title>
        <authorList>
            <person name="Kurihara N."/>
            <person name="Menaa C."/>
            <person name="Maeda H."/>
            <person name="Haile D.J."/>
            <person name="Reddy S.V."/>
        </authorList>
    </citation>
    <scope>INTERACTION WITH OSTF1</scope>
    <scope>TISSUE SPECIFICITY</scope>
</reference>
<reference key="18">
    <citation type="journal article" date="2001" name="Nat. Cell Biol.">
        <title>Spinal muscular atrophy disrupts the interaction of ZPR1 with the SMN protein.</title>
        <authorList>
            <person name="Gangwani L."/>
            <person name="Mikrut M."/>
            <person name="Theroux S."/>
            <person name="Sharma M."/>
            <person name="Davis R.J."/>
        </authorList>
    </citation>
    <scope>INTERACTION WITH ZPR1</scope>
    <scope>SUBCELLULAR LOCATION</scope>
</reference>
<reference key="19">
    <citation type="journal article" date="2002" name="Curr. Opin. Cell Biol.">
        <title>The SMN complex, an assemblyosome of ribonucleoproteins.</title>
        <authorList>
            <person name="Paushkin S."/>
            <person name="Gubitz A.K."/>
            <person name="Massenet S."/>
            <person name="Dreyfuss G."/>
        </authorList>
    </citation>
    <scope>REVIEW</scope>
    <scope>SUBCELLULAR LOCATION</scope>
</reference>
<reference key="20">
    <citation type="journal article" date="2002" name="Hum. Mol. Genet.">
        <title>SMN, the spinal muscular atrophy protein, forms a pre-import snRNP complex with snurportin1 and importin beta.</title>
        <authorList>
            <person name="Narayanan U."/>
            <person name="Ospina J.K."/>
            <person name="Frey M.R."/>
            <person name="Hebert M.D."/>
            <person name="Matera A.G."/>
        </authorList>
    </citation>
    <scope>IDENTIFICATION IN AN IMPORT SNRNP COMPLEX</scope>
    <scope>INTERACTION WITH DDX20; RNUT1 AND SNRPB</scope>
</reference>
<reference key="21">
    <citation type="journal article" date="2002" name="J. Biol. Chem.">
        <title>Identification and characterization of Gemin7, a novel component of the survival of motor neuron complex.</title>
        <authorList>
            <person name="Baccon J."/>
            <person name="Pellizzoni L."/>
            <person name="Rappsilber J."/>
            <person name="Mann M."/>
            <person name="Dreyfuss G."/>
        </authorList>
    </citation>
    <scope>INTERACTION WITH GEMIN FAMILY MEMBERS</scope>
</reference>
<reference key="22">
    <citation type="journal article" date="2003" name="Genes Dev.">
        <title>Unique Sm core structure of U7 snRNPs: assembly by a specialized SMN complex and the role of a new component, Lsm11, in histone RNA processing.</title>
        <authorList>
            <person name="Pillai R.S."/>
            <person name="Grimmler M."/>
            <person name="Meister G."/>
            <person name="Will C.L."/>
            <person name="Luehrmann R."/>
            <person name="Fischer U."/>
            <person name="Schuemperli D."/>
        </authorList>
    </citation>
    <scope>INTERACTION WITH LSM11</scope>
    <source>
        <tissue>Cervix carcinoma</tissue>
    </source>
</reference>
<reference key="23">
    <citation type="journal article" date="2004" name="Biochem. Biophys. Res. Commun.">
        <title>Rpp20 interacts with SMN and is re-distributed into SMN granules in response to stress.</title>
        <authorList>
            <person name="Hua Y."/>
            <person name="Zhou J."/>
        </authorList>
    </citation>
    <scope>SUBUNIT</scope>
    <scope>INTERACTION WITH RPP20/POP7</scope>
    <scope>SUBCELLULAR LOCATION</scope>
    <scope>MUTAGENESIS OF GLU-134</scope>
    <scope>CHARACTERIZATION OF VARIANTS SMA1 CYS-272 AND VAL-279</scope>
    <scope>CHARACTERIZATION OF VARIANT SMA2 AND SMA3 ILE-274</scope>
    <scope>CHARACTERIZATION OF VARIANT SMA3 ILE-262</scope>
</reference>
<reference key="24">
    <citation type="journal article" date="2005" name="J. Biol. Chem.">
        <title>Toward an assembly line for U7 snRNPs: interactions of U7-specific Lsm proteins with PRMT5 and SMN complexes.</title>
        <authorList>
            <person name="Azzouz T.N."/>
            <person name="Pillai R.S."/>
            <person name="Dapp C."/>
            <person name="Chari A."/>
            <person name="Meister G."/>
            <person name="Kambach C."/>
            <person name="Fischer U."/>
            <person name="Schuemperli D."/>
        </authorList>
    </citation>
    <scope>INTERACTION WITH LSM10; LSM11 AND SNRPB</scope>
</reference>
<reference key="25">
    <citation type="journal article" date="2006" name="Cell">
        <title>Global, in vivo, and site-specific phosphorylation dynamics in signaling networks.</title>
        <authorList>
            <person name="Olsen J.V."/>
            <person name="Blagoev B."/>
            <person name="Gnad F."/>
            <person name="Macek B."/>
            <person name="Kumar C."/>
            <person name="Mortensen P."/>
            <person name="Mann M."/>
        </authorList>
    </citation>
    <scope>PHOSPHORYLATION [LARGE SCALE ANALYSIS] AT SER-28 AND SER-31</scope>
    <scope>IDENTIFICATION BY MASS SPECTROMETRY [LARGE SCALE ANALYSIS]</scope>
    <source>
        <tissue>Cervix carcinoma</tissue>
    </source>
</reference>
<reference key="26">
    <citation type="journal article" date="2007" name="Chromosoma">
        <title>FRG1P-mediated aggregation of proteins involved in pre-mRNA processing.</title>
        <authorList>
            <person name="van Koningsbruggen S."/>
            <person name="Straasheijm K.R."/>
            <person name="Sterrenburg E."/>
            <person name="de Graaf N."/>
            <person name="Dauwerse H.G."/>
            <person name="Frants R.R."/>
            <person name="van der Maarel S.M."/>
        </authorList>
    </citation>
    <scope>INTERACTION WITH FRG1</scope>
</reference>
<reference key="27">
    <citation type="journal article" date="2007" name="Electrophoresis">
        <title>Toward a global characterization of the phosphoproteome in prostate cancer cells: identification of phosphoproteins in the LNCaP cell line.</title>
        <authorList>
            <person name="Giorgianni F."/>
            <person name="Zhao Y."/>
            <person name="Desiderio D.M."/>
            <person name="Beranova-Giorgianni S."/>
        </authorList>
    </citation>
    <scope>PHOSPHORYLATION [LARGE SCALE ANALYSIS] AT SER-31</scope>
    <scope>IDENTIFICATION BY MASS SPECTROMETRY [LARGE SCALE ANALYSIS]</scope>
    <source>
        <tissue>Prostate cancer</tissue>
    </source>
</reference>
<reference key="28">
    <citation type="journal article" date="2007" name="J. Biol. Chem.">
        <title>A comprehensive interaction map of the human survival of motor neuron (SMN) complex.</title>
        <authorList>
            <person name="Otter S."/>
            <person name="Grimmler M."/>
            <person name="Neuenkirchen N."/>
            <person name="Chari A."/>
            <person name="Sickmann A."/>
            <person name="Fischer U."/>
        </authorList>
    </citation>
    <scope>SUBUNIT</scope>
    <scope>IDENTIFICATION IN THE SMN COMPLEX</scope>
    <scope>INTERACTION WITH GEMIN3; GEMIN2 AND GEMIN8</scope>
</reference>
<reference key="29">
    <citation type="journal article" date="2008" name="Cell">
        <title>An assembly chaperone collaborates with the SMN complex to generate spliceosomal SnRNPs.</title>
        <authorList>
            <person name="Chari A."/>
            <person name="Golas M.M."/>
            <person name="Klingenhager M."/>
            <person name="Neuenkirchen N."/>
            <person name="Sander B."/>
            <person name="Englbrecht C."/>
            <person name="Sickmann A."/>
            <person name="Stark H."/>
            <person name="Fischer U."/>
        </authorList>
    </citation>
    <scope>FUNCTION IN SNRNP BIOGENESIS</scope>
    <scope>IDENTIFICATION IN SMN-SM COMPLEX</scope>
</reference>
<reference key="30">
    <citation type="journal article" date="2008" name="J. Biol. Chem.">
        <title>In vitro and in cellulo evidences for association of the survival of motor neuron complex with the fragile X mental retardation protein.</title>
        <authorList>
            <person name="Piazzon N."/>
            <person name="Rage F."/>
            <person name="Schlotter F."/>
            <person name="Moine H."/>
            <person name="Branlant C."/>
            <person name="Massenet S."/>
        </authorList>
    </citation>
    <scope>INTERACTION WITH FMR1</scope>
    <scope>SUBCELLULAR LOCATION</scope>
</reference>
<reference key="31">
    <citation type="journal article" date="2008" name="Mol. Cell">
        <title>Kinase-selective enrichment enables quantitative phosphoproteomics of the kinome across the cell cycle.</title>
        <authorList>
            <person name="Daub H."/>
            <person name="Olsen J.V."/>
            <person name="Bairlein M."/>
            <person name="Gnad F."/>
            <person name="Oppermann F.S."/>
            <person name="Korner R."/>
            <person name="Greff Z."/>
            <person name="Keri G."/>
            <person name="Stemmann O."/>
            <person name="Mann M."/>
        </authorList>
    </citation>
    <scope>PHOSPHORYLATION [LARGE SCALE ANALYSIS] AT SER-8; THR-25; SER-28 AND SER-31</scope>
    <scope>IDENTIFICATION BY MASS SPECTROMETRY [LARGE SCALE ANALYSIS]</scope>
    <source>
        <tissue>Cervix carcinoma</tissue>
    </source>
</reference>
<reference key="32">
    <citation type="journal article" date="2008" name="Proc. Natl. Acad. Sci. U.S.A.">
        <title>A quantitative atlas of mitotic phosphorylation.</title>
        <authorList>
            <person name="Dephoure N."/>
            <person name="Zhou C."/>
            <person name="Villen J."/>
            <person name="Beausoleil S.A."/>
            <person name="Bakalarski C.E."/>
            <person name="Elledge S.J."/>
            <person name="Gygi S.P."/>
        </authorList>
    </citation>
    <scope>PHOSPHORYLATION [LARGE SCALE ANALYSIS] AT THR-25; SER-28 AND SER-31</scope>
    <scope>IDENTIFICATION BY MASS SPECTROMETRY [LARGE SCALE ANALYSIS]</scope>
    <source>
        <tissue>Cervix carcinoma</tissue>
    </source>
</reference>
<reference key="33">
    <citation type="journal article" date="2009" name="Anal. Chem.">
        <title>Lys-N and trypsin cover complementary parts of the phosphoproteome in a refined SCX-based approach.</title>
        <authorList>
            <person name="Gauci S."/>
            <person name="Helbig A.O."/>
            <person name="Slijper M."/>
            <person name="Krijgsveld J."/>
            <person name="Heck A.J."/>
            <person name="Mohammed S."/>
        </authorList>
    </citation>
    <scope>ACETYLATION [LARGE SCALE ANALYSIS] AT ALA-2</scope>
    <scope>CLEAVAGE OF INITIATOR METHIONINE [LARGE SCALE ANALYSIS]</scope>
    <scope>IDENTIFICATION BY MASS SPECTROMETRY [LARGE SCALE ANALYSIS]</scope>
</reference>
<reference key="34">
    <citation type="journal article" date="2009" name="Mol. Cell. Proteomics">
        <title>Large-scale proteomics analysis of the human kinome.</title>
        <authorList>
            <person name="Oppermann F.S."/>
            <person name="Gnad F."/>
            <person name="Olsen J.V."/>
            <person name="Hornberger R."/>
            <person name="Greff Z."/>
            <person name="Keri G."/>
            <person name="Mann M."/>
            <person name="Daub H."/>
        </authorList>
    </citation>
    <scope>PHOSPHORYLATION [LARGE SCALE ANALYSIS] AT THR-25; SER-28 AND SER-31</scope>
    <scope>IDENTIFICATION BY MASS SPECTROMETRY [LARGE SCALE ANALYSIS]</scope>
</reference>
<reference key="35">
    <citation type="journal article" date="2009" name="Sci. Signal.">
        <title>Quantitative phosphoproteomic analysis of T cell receptor signaling reveals system-wide modulation of protein-protein interactions.</title>
        <authorList>
            <person name="Mayya V."/>
            <person name="Lundgren D.H."/>
            <person name="Hwang S.-I."/>
            <person name="Rezaul K."/>
            <person name="Wu L."/>
            <person name="Eng J.K."/>
            <person name="Rodionov V."/>
            <person name="Han D.K."/>
        </authorList>
    </citation>
    <scope>PHOSPHORYLATION [LARGE SCALE ANALYSIS] AT THR-25; SER-28 AND SER-31</scope>
    <scope>IDENTIFICATION BY MASS SPECTROMETRY [LARGE SCALE ANALYSIS]</scope>
    <source>
        <tissue>Leukemic T-cell</tissue>
    </source>
</reference>
<reference key="36">
    <citation type="journal article" date="2010" name="Sci. Signal.">
        <title>Quantitative phosphoproteomics reveals widespread full phosphorylation site occupancy during mitosis.</title>
        <authorList>
            <person name="Olsen J.V."/>
            <person name="Vermeulen M."/>
            <person name="Santamaria A."/>
            <person name="Kumar C."/>
            <person name="Miller M.L."/>
            <person name="Jensen L.J."/>
            <person name="Gnad F."/>
            <person name="Cox J."/>
            <person name="Jensen T.S."/>
            <person name="Nigg E.A."/>
            <person name="Brunak S."/>
            <person name="Mann M."/>
        </authorList>
    </citation>
    <scope>PHOSPHORYLATION [LARGE SCALE ANALYSIS] AT SER-28 AND SER-31</scope>
    <scope>IDENTIFICATION BY MASS SPECTROMETRY [LARGE SCALE ANALYSIS]</scope>
    <source>
        <tissue>Cervix carcinoma</tissue>
    </source>
</reference>
<reference key="37">
    <citation type="journal article" date="2010" name="PLoS Biol.">
        <title>WRAP53 is essential for Cajal body formation and for targeting the survival of motor neuron complex to Cajal bodies.</title>
        <authorList>
            <person name="Mahmoudi S."/>
            <person name="Henriksson S."/>
            <person name="Weibrecht I."/>
            <person name="Smith S."/>
            <person name="Soederberg O."/>
            <person name="Stroemblad S."/>
            <person name="Wiman K.G."/>
            <person name="Farnebo M."/>
        </authorList>
    </citation>
    <scope>SUBCELLULAR LOCATION</scope>
    <scope>INTERACTION WITH WRAP53</scope>
</reference>
<reference key="38">
    <citation type="journal article" date="2011" name="BMC Syst. Biol.">
        <title>Initial characterization of the human central proteome.</title>
        <authorList>
            <person name="Burkard T.R."/>
            <person name="Planyavsky M."/>
            <person name="Kaupe I."/>
            <person name="Breitwieser F.P."/>
            <person name="Buerckstuemmer T."/>
            <person name="Bennett K.L."/>
            <person name="Superti-Furga G."/>
            <person name="Colinge J."/>
        </authorList>
    </citation>
    <scope>IDENTIFICATION BY MASS SPECTROMETRY [LARGE SCALE ANALYSIS]</scope>
</reference>
<reference key="39">
    <citation type="journal article" date="2011" name="Biochim. Biophys. Acta">
        <title>Identification of the phosphorylation sites in the survival motor neuron protein by protein kinase A.</title>
        <authorList>
            <person name="Wu C.Y."/>
            <person name="Curtis A."/>
            <person name="Choi Y.S."/>
            <person name="Maeda M."/>
            <person name="Xu M.J."/>
            <person name="Berg A."/>
            <person name="Joneja U."/>
            <person name="Mason R.W."/>
            <person name="Lee K.H."/>
            <person name="Wang W."/>
        </authorList>
    </citation>
    <scope>PHOSPHORYLATION AT SER-4; SER-5; SER-8; THR-85 AND SER-187 BY PKA</scope>
</reference>
<reference key="40">
    <citation type="journal article" date="2011" name="Mol. Cell">
        <title>Human senataxin resolves RNA/DNA hybrids formed at transcriptional pause sites to promote Xrn2-dependent termination.</title>
        <authorList>
            <person name="Skourti-Stathaki K."/>
            <person name="Proudfoot N.J."/>
            <person name="Gromak N."/>
        </authorList>
    </citation>
    <scope>INTERACTION WITH SETX</scope>
</reference>
<reference key="41">
    <citation type="journal article" date="2011" name="Sci. Signal.">
        <title>System-wide temporal characterization of the proteome and phosphoproteome of human embryonic stem cell differentiation.</title>
        <authorList>
            <person name="Rigbolt K.T."/>
            <person name="Prokhorova T.A."/>
            <person name="Akimov V."/>
            <person name="Henningsen J."/>
            <person name="Johansen P.T."/>
            <person name="Kratchmarova I."/>
            <person name="Kassem M."/>
            <person name="Mann M."/>
            <person name="Olsen J.V."/>
            <person name="Blagoev B."/>
        </authorList>
    </citation>
    <scope>ACETYLATION [LARGE SCALE ANALYSIS] AT ALA-2</scope>
    <scope>PHOSPHORYLATION [LARGE SCALE ANALYSIS] AT SER-4; SER-5; SER-8 AND SER-28</scope>
    <scope>CLEAVAGE OF INITIATOR METHIONINE [LARGE SCALE ANALYSIS]</scope>
    <scope>IDENTIFICATION BY MASS SPECTROMETRY [LARGE SCALE ANALYSIS]</scope>
</reference>
<reference key="42">
    <citation type="journal article" date="2012" name="Cell">
        <title>An SMN-dependent U12 splicing event essential for motor circuit function.</title>
        <authorList>
            <person name="Lotti F."/>
            <person name="Imlach W.L."/>
            <person name="Saieva L."/>
            <person name="Beck E.S."/>
            <person name="Hao le T."/>
            <person name="Li D.K."/>
            <person name="Jiao W."/>
            <person name="Mentis G.Z."/>
            <person name="Beattie C.E."/>
            <person name="McCabe B.D."/>
            <person name="Pellizzoni L."/>
        </authorList>
    </citation>
    <scope>FUNCTION</scope>
</reference>
<reference key="43">
    <citation type="journal article" date="2012" name="Mol. Cell. Proteomics">
        <title>Comparative large-scale characterisation of plant vs. mammal proteins reveals similar and idiosyncratic N-alpha acetylation features.</title>
        <authorList>
            <person name="Bienvenut W.V."/>
            <person name="Sumpton D."/>
            <person name="Martinez A."/>
            <person name="Lilla S."/>
            <person name="Espagne C."/>
            <person name="Meinnel T."/>
            <person name="Giglione C."/>
        </authorList>
    </citation>
    <scope>ACETYLATION [LARGE SCALE ANALYSIS] AT ALA-2</scope>
    <scope>CLEAVAGE OF INITIATOR METHIONINE [LARGE SCALE ANALYSIS]</scope>
    <scope>IDENTIFICATION BY MASS SPECTROMETRY [LARGE SCALE ANALYSIS]</scope>
</reference>
<reference key="44">
    <citation type="journal article" date="2012" name="Proc. Natl. Acad. Sci. U.S.A.">
        <title>N-terminal acetylome analyses and functional insights of the N-terminal acetyltransferase NatB.</title>
        <authorList>
            <person name="Van Damme P."/>
            <person name="Lasa M."/>
            <person name="Polevoda B."/>
            <person name="Gazquez C."/>
            <person name="Elosegui-Artola A."/>
            <person name="Kim D.S."/>
            <person name="De Juan-Pardo E."/>
            <person name="Demeyer K."/>
            <person name="Hole K."/>
            <person name="Larrea E."/>
            <person name="Timmerman E."/>
            <person name="Prieto J."/>
            <person name="Arnesen T."/>
            <person name="Sherman F."/>
            <person name="Gevaert K."/>
            <person name="Aldabe R."/>
        </authorList>
    </citation>
    <scope>ACETYLATION [LARGE SCALE ANALYSIS] AT ALA-2</scope>
    <scope>CLEAVAGE OF INITIATOR METHIONINE [LARGE SCALE ANALYSIS]</scope>
    <scope>IDENTIFICATION BY MASS SPECTROMETRY [LARGE SCALE ANALYSIS]</scope>
</reference>
<reference key="45">
    <citation type="journal article" date="2013" name="J. Proteome Res.">
        <title>Toward a comprehensive characterization of a human cancer cell phosphoproteome.</title>
        <authorList>
            <person name="Zhou H."/>
            <person name="Di Palma S."/>
            <person name="Preisinger C."/>
            <person name="Peng M."/>
            <person name="Polat A.N."/>
            <person name="Heck A.J."/>
            <person name="Mohammed S."/>
        </authorList>
    </citation>
    <scope>PHOSPHORYLATION [LARGE SCALE ANALYSIS] AT SER-4; SER-8; THR-25; SER-28; SER-31 AND THR-69</scope>
    <scope>IDENTIFICATION BY MASS SPECTROMETRY [LARGE SCALE ANALYSIS]</scope>
    <source>
        <tissue>Cervix carcinoma</tissue>
        <tissue>Erythroleukemia</tissue>
    </source>
</reference>
<reference key="46">
    <citation type="journal article" date="2014" name="J. Proteomics">
        <title>An enzyme assisted RP-RPLC approach for in-depth analysis of human liver phosphoproteome.</title>
        <authorList>
            <person name="Bian Y."/>
            <person name="Song C."/>
            <person name="Cheng K."/>
            <person name="Dong M."/>
            <person name="Wang F."/>
            <person name="Huang J."/>
            <person name="Sun D."/>
            <person name="Wang L."/>
            <person name="Ye M."/>
            <person name="Zou H."/>
        </authorList>
    </citation>
    <scope>PHOSPHORYLATION [LARGE SCALE ANALYSIS] AT THR-25; SER-28 AND SER-31</scope>
    <scope>IDENTIFICATION BY MASS SPECTROMETRY [LARGE SCALE ANALYSIS]</scope>
    <source>
        <tissue>Liver</tissue>
    </source>
</reference>
<reference key="47">
    <citation type="journal article" date="2015" name="J. Biol. Chem.">
        <title>Oligomeric Properties of Survival Motor Neuron.Gemin2 Complexes.</title>
        <authorList>
            <person name="Gupta K."/>
            <person name="Martin R."/>
            <person name="Sharp R."/>
            <person name="Sarachan K.L."/>
            <person name="Ninan N.S."/>
            <person name="Van Duyne G.D."/>
        </authorList>
    </citation>
    <scope>SUBUNIT</scope>
    <scope>INTERACTION WITH GEMIN2</scope>
</reference>
<reference key="48">
    <citation type="journal article" date="2015" name="Nat. Commun.">
        <title>PRMT9 is a type II methyltransferase that methylates the splicing factor SAP145.</title>
        <authorList>
            <person name="Yang Y."/>
            <person name="Hadjikyriacou A."/>
            <person name="Xia Z."/>
            <person name="Gayatri S."/>
            <person name="Kim D."/>
            <person name="Zurita-Lopez C."/>
            <person name="Kelly R."/>
            <person name="Guo A."/>
            <person name="Li W."/>
            <person name="Clarke S.G."/>
            <person name="Bedford M.T."/>
        </authorList>
    </citation>
    <scope>INTERACTION WITH SF3B2</scope>
</reference>
<reference key="49">
    <citation type="journal article" date="2016" name="Nature">
        <title>SMN and symmetric arginine dimethylation of RNA polymerase II C-terminal domain control termination.</title>
        <authorList>
            <person name="Yanling Zhao D."/>
            <person name="Gish G."/>
            <person name="Braunschweig U."/>
            <person name="Li Y."/>
            <person name="Ni Z."/>
            <person name="Schmitges F.W."/>
            <person name="Zhong G."/>
            <person name="Liu K."/>
            <person name="Li W."/>
            <person name="Moffat J."/>
            <person name="Vedadi M."/>
            <person name="Min J."/>
            <person name="Pawson T.J."/>
            <person name="Blencowe B.J."/>
            <person name="Greenblatt J.F."/>
        </authorList>
    </citation>
    <scope>FUNCTION</scope>
    <scope>INTERACTION WITH POLR2A; PRMT5; SETX AND XRN2</scope>
    <scope>DOMAIN TUDOR</scope>
</reference>
<reference key="50">
    <citation type="journal article" date="2017" name="Nat. Struct. Mol. Biol.">
        <title>Site-specific mapping of the human SUMO proteome reveals co-modification with phosphorylation.</title>
        <authorList>
            <person name="Hendriks I.A."/>
            <person name="Lyon D."/>
            <person name="Young C."/>
            <person name="Jensen L.J."/>
            <person name="Vertegaal A.C."/>
            <person name="Nielsen M.L."/>
        </authorList>
    </citation>
    <scope>SUMOYLATION [LARGE SCALE ANALYSIS] AT LYS-51 AND LYS-209</scope>
    <scope>IDENTIFICATION BY MASS SPECTROMETRY [LARGE SCALE ANALYSIS]</scope>
</reference>
<reference evidence="55" key="51">
    <citation type="journal article" date="2001" name="Nat. Struct. Biol.">
        <title>SMN tudor domain structure and its interaction with the Sm proteins.</title>
        <authorList>
            <person name="Selenko P."/>
            <person name="Sprangers R."/>
            <person name="Stier G."/>
            <person name="Buhler D."/>
            <person name="Fischer U."/>
            <person name="Sattler M."/>
        </authorList>
    </citation>
    <scope>STRUCTURE BY NMR OF 90-145</scope>
    <scope>INTERACTION WITH SNRPD1 AND SNRPD3</scope>
    <scope>MUTAGENESIS OF GLU-134</scope>
</reference>
<reference evidence="56" key="52">
    <citation type="journal article" date="2003" name="J. Mol. Biol.">
        <title>High-resolution X-ray and NMR structures of the SMN Tudor domain: conformational variation in the binding site for symmetrically dimethylated arginine residues.</title>
        <authorList>
            <person name="Sprangers R."/>
            <person name="Groves M.R."/>
            <person name="Sinning I."/>
            <person name="Sattler M."/>
        </authorList>
    </citation>
    <scope>X-RAY CRYSTALLOGRAPHY (1.80 ANGSTROMS) OF 89-147</scope>
    <scope>INTERACTION WITH SNRPD3</scope>
    <scope>DOMAIN TUDOR</scope>
</reference>
<reference evidence="61" key="53">
    <citation type="journal article" date="2011" name="Cell">
        <title>Structure of a key intermediate of the SMN complex reveals Gemin2's crucial function in snRNP assembly.</title>
        <authorList>
            <person name="Zhang R."/>
            <person name="So B.R."/>
            <person name="Li P."/>
            <person name="Yong J."/>
            <person name="Glisovic T."/>
            <person name="Wan L."/>
            <person name="Dreyfuss G."/>
        </authorList>
    </citation>
    <scope>X-RAY CRYSTALLOGRAPHY (2.50 ANGSTROMS) OF 26-62 IN COMPLEX WITH SNRPD1; SNRPD2; SNRPE; SNRPF; SNRPG AND GEMIN2</scope>
    <scope>FUNCTION</scope>
    <scope>SUBUNIT</scope>
    <scope>INTERACTION WITH GEMIN2</scope>
    <scope>VARIANT SMA3 VAL-44</scope>
    <scope>MUTAGENESIS OF ASP-44</scope>
</reference>
<reference evidence="58 59" key="54">
    <citation type="journal article" date="2011" name="Nat. Struct. Mol. Biol.">
        <title>Structural basis for dimethylarginine recognition by the Tudor domains of human SMN and SPF30 proteins.</title>
        <authorList>
            <person name="Tripsianes K."/>
            <person name="Madl T."/>
            <person name="Machyna M."/>
            <person name="Fessas D."/>
            <person name="Englbrecht C."/>
            <person name="Fischer U."/>
            <person name="Neugebauer K.M."/>
            <person name="Sattler M."/>
        </authorList>
    </citation>
    <scope>STRUCTURE BY NMR OF 84-147 IN COMPLEX WITH DIMETHYLATED ARGININE</scope>
    <scope>FUNCTION</scope>
    <scope>DOMAIN TUDOR</scope>
    <scope>INTERACTION WITH SNRPD3</scope>
    <scope>MUTAGENESIS OF TRP-92; TRP-102; TYR-109; TYR-127; TYR-130; ASN-132; 134-GLU--GLN-136 AND GLU-134</scope>
    <scope>CHARACTERIZATION OF VARIANT SMA1 GLU-136</scope>
</reference>
<reference evidence="60" key="55">
    <citation type="journal article" date="2012" name="Structure">
        <title>The survival motor neuron protein forms soluble glycine zipper oligomers.</title>
        <authorList>
            <person name="Martin R."/>
            <person name="Gupta K."/>
            <person name="Ninan N.S."/>
            <person name="Perry K."/>
            <person name="Van Duyne G.D."/>
        </authorList>
    </citation>
    <scope>X-RAY CRYSTALLOGRAPHY (1.90 ANGSTROMS) OF 263-294</scope>
    <scope>SUBUNIT</scope>
    <scope>INTERACTION WITH GEMIN2</scope>
    <scope>CHARACTERIZATION OF VARIANTS SMA1 CYS-272; SMA2/SMA3 ILE-274; SMA3 SER-275 AND SMA1 VAL-279</scope>
    <scope>MUTAGENESIS OF LEU-260; MET-263; LEU-264; SER-266; TRP-267; TYR-268; GLY-271; TYR-272; THR-274; GLY-275 AND GLY-279</scope>
</reference>
<reference evidence="57" key="56">
    <citation type="journal article" date="2012" name="Biochem. J.">
        <title>Solution structure of the core SMN-Gemin2 complex.</title>
        <authorList>
            <person name="Sarachan K.L."/>
            <person name="Valentine K.G."/>
            <person name="Gupta K."/>
            <person name="Moorman V.R."/>
            <person name="Gledhill J.M."/>
            <person name="Bernens M."/>
            <person name="Tommos C."/>
            <person name="Wand A.J."/>
            <person name="Van Duyne G.D."/>
        </authorList>
    </citation>
    <scope>STRUCTURE BY NMR OF 26-51</scope>
    <scope>INTERACTION WITH GEMIN2</scope>
    <scope>MUTAGENESIS OF TRP-34; LEU-39; TYR-43 AND ALA-46</scope>
</reference>
<reference evidence="62 63 64" key="57">
    <citation type="journal article" date="2020" name="Nucleic Acids Res.">
        <title>Negative cooperativity between Gemin2 and RNA provides insights into RNA selection and the SMN complex's release in snRNP assembly.</title>
        <authorList>
            <person name="Yi H."/>
            <person name="Mu L."/>
            <person name="Shen C."/>
            <person name="Kong X."/>
            <person name="Wang Y."/>
            <person name="Hou Y."/>
            <person name="Zhang R."/>
        </authorList>
    </citation>
    <scope>X-RAY CRYSTALLOGRAPHY (3.12 ANGSTROMS) OF 26-62 IN COMPLEX WITH GEMIN2; SNRPD1; SNRPD2; SNRPE; SNRPF AND SNRPG</scope>
    <scope>FUNCTION</scope>
    <scope>INTERACTION WITH GEMIN2</scope>
</reference>
<reference key="58">
    <citation type="journal article" date="1997" name="Hum. Mol. Genet.">
        <title>Missense mutation clustering in the survival motor neuron gene: a role for a conserved tyrosine and glycine rich region of the protein in RNA metabolism?</title>
        <authorList>
            <person name="Talbot K."/>
            <person name="Ponting C.P."/>
            <person name="Theodosiou A.M."/>
            <person name="Rodriques N.R."/>
            <person name="Surtees R."/>
            <person name="Mountford R."/>
            <person name="Davies K.E."/>
        </authorList>
    </citation>
    <scope>VARIANT SMA1 VAL-279</scope>
</reference>
<reference key="59">
    <citation type="journal article" date="1997" name="Hum. Mol. Genet.">
        <title>Missense mutations in exon 6 of the survival motor neuron gene in patients with spinal muscular atrophy (SMA).</title>
        <authorList>
            <person name="Hahnen E."/>
            <person name="Schoenling J."/>
            <person name="Rudnik-Schoeneborn S."/>
            <person name="Raschke H."/>
            <person name="Zerres K."/>
            <person name="Wirth B."/>
        </authorList>
    </citation>
    <scope>VARIANT SMA3 ILE-262</scope>
    <scope>VARIANT SMA2/SMA3 ILE-274</scope>
</reference>
<reference key="60">
    <citation type="journal article" date="1997" name="Neurogenetics">
        <title>Molecular diagnosis of non-deletion SMA patients using quantitative PCR of SMN exon 7.</title>
        <authorList>
            <person name="Rochette C.F."/>
            <person name="Surh L.C."/>
            <person name="Ray P.N."/>
            <person name="McAndrew P.E."/>
            <person name="Prior T.W."/>
            <person name="Burghes A.H.M."/>
            <person name="Vanasse M."/>
            <person name="Simard L.R."/>
        </authorList>
    </citation>
    <scope>VARIANT SMA3 LEU-245</scope>
    <scope>VARIANT SMA1 CYS-272</scope>
</reference>
<reference key="61">
    <citation type="journal article" date="1998" name="Am. J. Hum. Genet.">
        <title>Intragenic telSMN mutations: frequency, distribution, evidence of a founder effect, and modification of the spinal muscular atrophy phenotype by cenSMN copy number.</title>
        <authorList>
            <person name="Parsons D.W."/>
            <person name="McAndrew P.E."/>
            <person name="Iannaccone S.T."/>
            <person name="Mendell J.R."/>
            <person name="Burghes A.H."/>
            <person name="Prior T.W."/>
        </authorList>
    </citation>
    <scope>VARIANT SMA2/SMA3 GLY-2</scope>
    <scope>VARIANT SMA3 SER-275</scope>
</reference>
<reference key="62">
    <citation type="journal article" date="1998" name="Neurogenetics">
        <title>Identification of a novel missense mutation of the smnt gene in two siblings with spinal muscular atrophy.</title>
        <authorList>
            <person name="Wang C.H."/>
            <person name="Papendick B.D."/>
            <person name="Bruinsma P."/>
            <person name="Day J.K."/>
        </authorList>
    </citation>
    <scope>VARIANT SMA2/SMA3 CYS-279</scope>
</reference>
<reference key="63">
    <citation type="journal article" date="1999" name="Proc. Natl. Acad. Sci. U.S.A.">
        <title>SMN mutants of spinal muscular atrophy patients are defective in binding to snRNP proteins.</title>
        <authorList>
            <person name="Pellizzoni L."/>
            <person name="Charroux B."/>
            <person name="Dreyfuss G."/>
        </authorList>
    </citation>
    <scope>SUBUNIT</scope>
    <scope>INTERACTION WITH SNRPB; GEMIN2; SNRPD1; SNRPD2; SNRPD3 AND SNRPE</scope>
    <scope>CHARACTERIZATION OF VARIANT SMA1 CYS-272</scope>
</reference>
<reference key="64">
    <citation type="journal article" date="2004" name="Neurology">
        <title>Detection of novel mutations in the SMN Tudor domain in type I SMA patients.</title>
        <authorList>
            <person name="Cusco I."/>
            <person name="Barcelo M.J."/>
            <person name="del Rio E."/>
            <person name="Baiget M."/>
            <person name="Tizzano E.F."/>
        </authorList>
    </citation>
    <scope>VARIANTS SMA1 PHE-116 AND GLU-136</scope>
</reference>
<reference key="65">
    <citation type="journal article" date="2005" name="Hum. Mutat.">
        <title>Molecular and functional analysis of intragenic SMN1 mutations in patients with spinal muscular atrophy.</title>
        <authorList>
            <person name="Sun Y."/>
            <person name="Grimmler M."/>
            <person name="Schwarzer V."/>
            <person name="Schoenen F."/>
            <person name="Fischer U."/>
            <person name="Wirth B."/>
        </authorList>
    </citation>
    <scope>VARIANTS SMA1/SMA2/SMA3 ASN-30; VAL-44; ARG-95; GLY-111; GLY-262; CYS-272 AND ILE-274</scope>
    <scope>CHARACTERIZATION OF VARIANTS SMA1/SMA2/SMA3 ASN-30; VAL-44; ARG-95 AND GLY-111</scope>
</reference>
<reference key="66">
    <citation type="journal article" date="2011" name="Hum. Mol. Genet.">
        <title>HuD interacts with survival motor neuron protein and can rescue spinal muscular atrophy-like neuronal defects.</title>
        <authorList>
            <person name="Hubers L."/>
            <person name="Valderrama-Carvajal H."/>
            <person name="Laframboise J."/>
            <person name="Timbers J."/>
            <person name="Sanchez G."/>
            <person name="Cote J."/>
        </authorList>
    </citation>
    <scope>INTERACTION WITH ELAVL4</scope>
    <scope>SUBCELLULAR LOCATION</scope>
    <scope>CHARACTERIZATION OF VARIANTS SMA2 GLU-111; SMA1 PHE-116 AND SMA1 GLU-136</scope>
    <scope>MUTAGENESIS OF GLU-134</scope>
</reference>
<reference key="67">
    <citation type="journal article" date="2011" name="J. Neurosci.">
        <title>The survival of motor neuron (SMN) protein interacts with the mRNA-binding protein HuD and regulates localization of poly(A) mRNA in primary motor neuron axons.</title>
        <authorList>
            <person name="Fallini C."/>
            <person name="Zhang H."/>
            <person name="Su Y."/>
            <person name="Silani V."/>
            <person name="Singer R.H."/>
            <person name="Rossoll W."/>
            <person name="Bassell G.J."/>
        </authorList>
    </citation>
    <scope>INTERACTION WITH ELAVL4</scope>
    <scope>VARIANT SMA1 VAL-279</scope>
    <scope>MUTAGENESIS OF GLU-134</scope>
</reference>
<reference key="68">
    <citation type="journal article" date="2017" name="J. Neurosci.">
        <title>HuD and the Survival Motor Neuron Protein Interact in Motoneurons and Are Essential for Motoneuron Development, Function, and mRNA Regulation.</title>
        <authorList>
            <person name="Hao le T."/>
            <person name="Duy P.Q."/>
            <person name="An M."/>
            <person name="Talbot J."/>
            <person name="Iyer C.C."/>
            <person name="Wolman M."/>
            <person name="Beattie C.E."/>
        </authorList>
    </citation>
    <scope>INTERACTION WITH ELAVL4</scope>
    <scope>MUTAGENESIS OF GLU-134</scope>
</reference>
<reference key="69">
    <citation type="journal article" date="2021" name="Nucleic Acids Res.">
        <title>Identification and structural analysis of the Schizosaccharomyces pombe SMN complex.</title>
        <authorList>
            <person name="Veepaschit J."/>
            <person name="Viswanathan A."/>
            <person name="Bordonne R."/>
            <person name="Grimm C."/>
            <person name="Fischer U."/>
        </authorList>
    </citation>
    <scope>INTERACTION WITH GEMIN8</scope>
    <scope>CHARACTERIZATION OF VARIANTS SMA1 CYS-272 AND SMA3 ILE-274</scope>
    <scope>MUTAGENESIS OF MET-263; SER-266 AND HIS-273</scope>
</reference>
<feature type="initiator methionine" description="Removed" evidence="70 73 74 75">
    <location>
        <position position="1"/>
    </location>
</feature>
<feature type="chain" id="PRO_0000218903" description="Survival motor neuron protein">
    <location>
        <begin position="2"/>
        <end position="294"/>
    </location>
</feature>
<feature type="domain" description="Tudor" evidence="2">
    <location>
        <begin position="91"/>
        <end position="151"/>
    </location>
</feature>
<feature type="region of interest" description="Disordered" evidence="3">
    <location>
        <begin position="1"/>
        <end position="32"/>
    </location>
</feature>
<feature type="region of interest" description="Interacts with GEMIN2" evidence="29 31 35">
    <location>
        <begin position="26"/>
        <end position="51"/>
    </location>
</feature>
<feature type="region of interest" description="Disordered" evidence="3">
    <location>
        <begin position="59"/>
        <end position="88"/>
    </location>
</feature>
<feature type="region of interest" description="Required for interaction with RPP20/POP7">
    <location>
        <begin position="97"/>
        <end position="209"/>
    </location>
</feature>
<feature type="region of interest" description="Disordered" evidence="3">
    <location>
        <begin position="156"/>
        <end position="222"/>
    </location>
</feature>
<feature type="region of interest" description="P2 (binding site for SNRPB)">
    <location>
        <begin position="240"/>
        <end position="267"/>
    </location>
</feature>
<feature type="region of interest" description="Involved in homooligomerization" evidence="4 16 21 29 32 35">
    <location>
        <begin position="252"/>
        <end position="280"/>
    </location>
</feature>
<feature type="region of interest" description="Required for interaction with SYNCRIP" evidence="10">
    <location>
        <begin position="279"/>
        <end position="294"/>
    </location>
</feature>
<feature type="compositionally biased region" description="Gly residues" evidence="3">
    <location>
        <begin position="1"/>
        <end position="12"/>
    </location>
</feature>
<feature type="compositionally biased region" description="Basic residues" evidence="3">
    <location>
        <begin position="68"/>
        <end position="82"/>
    </location>
</feature>
<feature type="compositionally biased region" description="Low complexity" evidence="3">
    <location>
        <begin position="156"/>
        <end position="166"/>
    </location>
</feature>
<feature type="compositionally biased region" description="Pro residues" evidence="3">
    <location>
        <begin position="194"/>
        <end position="204"/>
    </location>
</feature>
<feature type="compositionally biased region" description="Low complexity" evidence="3">
    <location>
        <begin position="206"/>
        <end position="215"/>
    </location>
</feature>
<feature type="modified residue" description="N-acetylalanine" evidence="70 73 74 75">
    <location>
        <position position="2"/>
    </location>
</feature>
<feature type="modified residue" description="Phosphoserine; by PKA" evidence="27 73 76">
    <location>
        <position position="4"/>
    </location>
</feature>
<feature type="modified residue" description="Phosphoserine; by PKA" evidence="27 73">
    <location>
        <position position="5"/>
    </location>
</feature>
<feature type="modified residue" description="Phosphoserine; by PKA" evidence="27 68 73 76">
    <location>
        <position position="8"/>
    </location>
</feature>
<feature type="modified residue" description="Phosphothreonine" evidence="67 68 69 71 76 77">
    <location>
        <position position="25"/>
    </location>
</feature>
<feature type="modified residue" description="Phosphoserine" evidence="65 67 68 69 71 72 73 76 77">
    <location>
        <position position="28"/>
    </location>
</feature>
<feature type="modified residue" description="Phosphoserine" evidence="65 66 67 68 69 71 72 76 77">
    <location>
        <position position="31"/>
    </location>
</feature>
<feature type="modified residue" description="Phosphothreonine" evidence="76">
    <location>
        <position position="69"/>
    </location>
</feature>
<feature type="modified residue" description="Phosphothreonine; by PKA" evidence="27">
    <location>
        <position position="85"/>
    </location>
</feature>
<feature type="modified residue" description="Phosphoserine; by PKA" evidence="27">
    <location>
        <position position="187"/>
    </location>
</feature>
<feature type="cross-link" description="Glycyl lysine isopeptide (Lys-Gly) (interchain with G-Cter in SUMO2)" evidence="78">
    <location>
        <position position="51"/>
    </location>
</feature>
<feature type="cross-link" description="Glycyl lysine isopeptide (Lys-Gly) (interchain with G-Cter in SUMO2)" evidence="78">
    <location>
        <position position="209"/>
    </location>
</feature>
<feature type="splice variant" id="VSP_006183" description="In isoform SMN-delta5 and isoform SMN-delta57." evidence="52">
    <location>
        <begin position="210"/>
        <end position="241"/>
    </location>
</feature>
<feature type="splice variant" id="VSP_006184" description="In isoform SMN-delta7 and isoform SMN-delta57." evidence="50 51">
    <original>GFRQ</original>
    <variation>EMLA</variation>
    <location>
        <begin position="279"/>
        <end position="282"/>
    </location>
</feature>
<feature type="splice variant" id="VSP_006185" description="In isoform SMN-delta7 and isoform SMN-delta57." evidence="50 51">
    <location>
        <begin position="283"/>
        <end position="294"/>
    </location>
</feature>
<feature type="sequence variant" id="VAR_005615" description="In SMA2 and SMA3; dbSNP:rs75030631." evidence="48">
    <original>A</original>
    <variation>G</variation>
    <location>
        <position position="2"/>
    </location>
</feature>
<feature type="sequence variant" id="VAR_034803" description="In SMA2; dbSNP:rs104893930." evidence="18">
    <original>D</original>
    <variation>N</variation>
    <location>
        <position position="30"/>
    </location>
</feature>
<feature type="sequence variant" id="VAR_034804" description="In SMA3; impairs GEMIN2 binding; dbSNP:rs104893931." evidence="18 29">
    <original>D</original>
    <variation>V</variation>
    <location>
        <position position="44"/>
    </location>
</feature>
<feature type="sequence variant" id="VAR_034805" description="In SMA3; reduces SMN binding to Sm proteins; dbSNP:rs104893927." evidence="18">
    <original>G</original>
    <variation>R</variation>
    <location>
        <position position="95"/>
    </location>
</feature>
<feature type="sequence variant" id="VAR_034806" description="In SMA2; reduces SMN binding to Sm proteins; abolishes the interaction with ELAVL4; dbSNP:rs104893935." evidence="18 25">
    <original>A</original>
    <variation>G</variation>
    <location>
        <position position="111"/>
    </location>
</feature>
<feature type="sequence variant" id="VAR_034807" description="In SMA1; abolishes the interaction with ELAVL4; dbSNP:rs104893933." evidence="17 25">
    <original>I</original>
    <variation>F</variation>
    <location>
        <position position="116"/>
    </location>
</feature>
<feature type="sequence variant" id="VAR_034808" description="In SMA1; impairs binding to substrate containing dimethylated arginine; abolishes the interaction with ELAVL4; dbSNP:rs104893934." evidence="17 25 30">
    <original>Q</original>
    <variation>E</variation>
    <location>
        <position position="136"/>
    </location>
</feature>
<feature type="sequence variant" id="VAR_010051" description="In SMA3; dbSNP:rs75586164." evidence="6">
    <original>P</original>
    <variation>L</variation>
    <location>
        <position position="245"/>
    </location>
</feature>
<feature type="sequence variant" id="VAR_034809" description="In SMA3; dbSNP:rs104893932." evidence="18">
    <original>S</original>
    <variation>G</variation>
    <location>
        <position position="262"/>
    </location>
</feature>
<feature type="sequence variant" id="VAR_005616" description="In SMA3; slightly reduces SMN binding to RPP20/POP7; dbSNP:rs75660264." evidence="16 45">
    <original>S</original>
    <variation>I</variation>
    <location>
        <position position="262"/>
    </location>
</feature>
<feature type="sequence variant" id="VAR_005617" description="In SMA1; abolishes SMN1 binding to RPP20/POP7 and severely impairs binding to SNRPB, GEMIN8 and homooligomerization; dbSNP:rs104893922." evidence="4 6 16 18 32 39 41">
    <original>Y</original>
    <variation>C</variation>
    <location>
        <position position="272"/>
    </location>
</feature>
<feature type="sequence variant" id="VAR_005618" description="In SMA2 and SMA3; Impairs SMN1 binding to RPP20/POP7, GEMIN8 and homooligomerization; dbSNP:rs76871093." evidence="16 18 32 39 45">
    <original>T</original>
    <variation>I</variation>
    <location>
        <position position="274"/>
    </location>
</feature>
<feature type="sequence variant" id="VAR_005619" description="In SMA3; impairs homooligomerization.; dbSNP:rs77301881." evidence="32 48">
    <original>G</original>
    <variation>S</variation>
    <location>
        <position position="275"/>
    </location>
</feature>
<feature type="sequence variant" id="VAR_007990" description="In SMA2 and SMA3; dbSNP:rs77969175." evidence="5">
    <original>G</original>
    <variation>C</variation>
    <location>
        <position position="279"/>
    </location>
</feature>
<feature type="sequence variant" id="VAR_005620" description="In SMA1; slightly reduces SMN binding to RPP20/POP7. Impairs homooligomerization and axon localization; dbSNP:rs76163360." evidence="16 26 32 44">
    <original>G</original>
    <variation>V</variation>
    <location>
        <position position="279"/>
    </location>
</feature>
<feature type="mutagenesis site" description="Impairs GEMIN2 binding." evidence="31">
    <original>W</original>
    <variation>A</variation>
    <location>
        <position position="34"/>
    </location>
</feature>
<feature type="mutagenesis site" description="Impairs GEMIN2 binding." evidence="31">
    <original>L</original>
    <variation>A</variation>
    <location>
        <position position="39"/>
    </location>
</feature>
<feature type="mutagenesis site" description="Impairs GEMIN2 binding." evidence="31">
    <original>Y</original>
    <variation>A</variation>
    <location>
        <position position="43"/>
    </location>
</feature>
<feature type="mutagenesis site" description="Impairs GEMIN2 binding." evidence="29">
    <original>D</original>
    <variation>A</variation>
    <location>
        <position position="44"/>
    </location>
</feature>
<feature type="mutagenesis site" description="Impairs GEMIN2 binding." evidence="31">
    <original>A</original>
    <variation>N</variation>
    <location>
        <position position="46"/>
    </location>
</feature>
<feature type="mutagenesis site" description="Impairs binding to substrate containing dimethylated arginine." evidence="30">
    <original>W</original>
    <variation>S</variation>
    <location>
        <position position="92"/>
    </location>
</feature>
<feature type="mutagenesis site" description="Impairs binding to substrate containing dimethylated arginine." evidence="30">
    <original>W</original>
    <variation>L</variation>
    <variation>V</variation>
    <location>
        <position position="102"/>
    </location>
</feature>
<feature type="mutagenesis site" description="Impairs binding to substrate containing dimethylated arginine." evidence="30">
    <original>Y</original>
    <variation>H</variation>
    <location>
        <position position="109"/>
    </location>
</feature>
<feature type="mutagenesis site" description="Impairs binding to substrate containing dimethylated arginine." evidence="30">
    <original>Y</original>
    <variation>L</variation>
    <variation>F</variation>
    <location>
        <position position="127"/>
    </location>
</feature>
<feature type="mutagenesis site" description="Impairs binding to substrate containing dimethylated arginine." evidence="30">
    <original>Y</original>
    <variation>D</variation>
    <location>
        <position position="130"/>
    </location>
</feature>
<feature type="mutagenesis site" description="Impairs binding to substrate containing dimethylated arginine." evidence="30">
    <original>N</original>
    <variation>D</variation>
    <variation>S</variation>
    <location>
        <position position="132"/>
    </location>
</feature>
<feature type="mutagenesis site" description="Impairs binding to substrate containing dimethylated arginine." evidence="30">
    <original>EEQ</original>
    <variation>SEV</variation>
    <location>
        <begin position="134"/>
        <end position="136"/>
    </location>
</feature>
<feature type="mutagenesis site" description="Impairs SMN binding to RPP20/POP7. Abolishes the interaction with ELAVL4. Abolishes interaction with SNRPD1 and SNRPD3. Impairs binding to substrate containing dimethylated arginine." evidence="7 16 25 26 30 37">
    <original>E</original>
    <variation>K</variation>
    <location>
        <position position="134"/>
    </location>
</feature>
<feature type="mutagenesis site" description="Impairs homooligomerization." evidence="32">
    <original>L</original>
    <variation>S</variation>
    <location>
        <position position="260"/>
    </location>
</feature>
<feature type="mutagenesis site" description="Impairs homooligomerization and GEMIN8 binding." evidence="32 39">
    <original>M</original>
    <variation>R</variation>
    <variation>T</variation>
    <variation>A</variation>
    <location>
        <position position="263"/>
    </location>
</feature>
<feature type="mutagenesis site" description="Impairs homooligomerization." evidence="32">
    <original>L</original>
    <variation>A</variation>
    <location>
        <position position="264"/>
    </location>
</feature>
<feature type="mutagenesis site" description="Impairs homooligomerization and GEMIN8 binding." evidence="32 39">
    <original>S</original>
    <variation>P</variation>
    <location>
        <position position="266"/>
    </location>
</feature>
<feature type="mutagenesis site" description="Impairs homooligomerization." evidence="32">
    <original>W</original>
    <variation>A</variation>
    <location>
        <position position="267"/>
    </location>
</feature>
<feature type="mutagenesis site" description="Impairs homooligomerization." evidence="32">
    <original>Y</original>
    <variation>A</variation>
    <location>
        <position position="268"/>
    </location>
</feature>
<feature type="mutagenesis site" description="Impairs homooligomerization." evidence="32">
    <original>G</original>
    <variation>A</variation>
    <location>
        <position position="271"/>
    </location>
</feature>
<feature type="mutagenesis site" description="Impairs homooligomerization." evidence="32">
    <original>Y</original>
    <variation>A</variation>
    <location>
        <position position="272"/>
    </location>
</feature>
<feature type="mutagenesis site" description="Impairs GEMIN8 binding." evidence="39">
    <original>H</original>
    <variation>R</variation>
    <location>
        <position position="273"/>
    </location>
</feature>
<feature type="mutagenesis site" description="Impairs homooligomerization." evidence="32">
    <original>T</original>
    <variation>A</variation>
    <location>
        <position position="274"/>
    </location>
</feature>
<feature type="mutagenesis site" description="Impairs homooligomerization." evidence="32">
    <original>G</original>
    <variation>A</variation>
    <location>
        <position position="275"/>
    </location>
</feature>
<feature type="mutagenesis site" description="Impairs homooligomerization." evidence="32">
    <original>G</original>
    <variation>E</variation>
    <location>
        <position position="279"/>
    </location>
</feature>
<feature type="helix" evidence="80">
    <location>
        <begin position="38"/>
        <end position="48"/>
    </location>
</feature>
<feature type="helix" evidence="81">
    <location>
        <begin position="87"/>
        <end position="89"/>
    </location>
</feature>
<feature type="strand" evidence="81">
    <location>
        <begin position="97"/>
        <end position="102"/>
    </location>
</feature>
<feature type="helix" evidence="81">
    <location>
        <begin position="103"/>
        <end position="105"/>
    </location>
</feature>
<feature type="strand" evidence="81">
    <location>
        <begin position="107"/>
        <end position="117"/>
    </location>
</feature>
<feature type="turn" evidence="81">
    <location>
        <begin position="118"/>
        <end position="121"/>
    </location>
</feature>
<feature type="strand" evidence="81">
    <location>
        <begin position="122"/>
        <end position="127"/>
    </location>
</feature>
<feature type="turn" evidence="81">
    <location>
        <begin position="128"/>
        <end position="130"/>
    </location>
</feature>
<feature type="strand" evidence="81">
    <location>
        <begin position="133"/>
        <end position="137"/>
    </location>
</feature>
<feature type="helix" evidence="81">
    <location>
        <begin position="138"/>
        <end position="140"/>
    </location>
</feature>
<feature type="helix" evidence="79">
    <location>
        <begin position="263"/>
        <end position="280"/>
    </location>
</feature>
<dbReference type="EMBL" id="U43883">
    <property type="protein sequence ID" value="AAC50473.1"/>
    <property type="molecule type" value="Genomic_DNA"/>
</dbReference>
<dbReference type="EMBL" id="U43876">
    <property type="protein sequence ID" value="AAC50473.1"/>
    <property type="status" value="JOINED"/>
    <property type="molecule type" value="Genomic_DNA"/>
</dbReference>
<dbReference type="EMBL" id="U43877">
    <property type="protein sequence ID" value="AAC50473.1"/>
    <property type="status" value="JOINED"/>
    <property type="molecule type" value="Genomic_DNA"/>
</dbReference>
<dbReference type="EMBL" id="U43878">
    <property type="protein sequence ID" value="AAC50473.1"/>
    <property type="status" value="JOINED"/>
    <property type="molecule type" value="Genomic_DNA"/>
</dbReference>
<dbReference type="EMBL" id="U43880">
    <property type="protein sequence ID" value="AAC50473.1"/>
    <property type="status" value="JOINED"/>
    <property type="molecule type" value="Genomic_DNA"/>
</dbReference>
<dbReference type="EMBL" id="U43881">
    <property type="protein sequence ID" value="AAC50473.1"/>
    <property type="status" value="JOINED"/>
    <property type="molecule type" value="Genomic_DNA"/>
</dbReference>
<dbReference type="EMBL" id="U43882">
    <property type="protein sequence ID" value="AAC50473.1"/>
    <property type="status" value="JOINED"/>
    <property type="molecule type" value="Genomic_DNA"/>
</dbReference>
<dbReference type="EMBL" id="U18423">
    <property type="protein sequence ID" value="AAA66242.1"/>
    <property type="molecule type" value="mRNA"/>
</dbReference>
<dbReference type="EMBL" id="U80017">
    <property type="protein sequence ID" value="AAC52048.1"/>
    <property type="molecule type" value="Genomic_DNA"/>
</dbReference>
<dbReference type="EMBL" id="AK289669">
    <property type="protein sequence ID" value="BAF82358.1"/>
    <property type="molecule type" value="mRNA"/>
</dbReference>
<dbReference type="EMBL" id="AC004999">
    <property type="protein sequence ID" value="AAC83178.1"/>
    <property type="molecule type" value="Genomic_DNA"/>
</dbReference>
<dbReference type="EMBL" id="AC005031">
    <property type="protein sequence ID" value="AAC62262.1"/>
    <property type="molecule type" value="Genomic_DNA"/>
</dbReference>
<dbReference type="EMBL" id="U21914">
    <property type="protein sequence ID" value="AAA64505.1"/>
    <property type="molecule type" value="mRNA"/>
</dbReference>
<dbReference type="EMBL" id="BC000908">
    <property type="protein sequence ID" value="AAH00908.1"/>
    <property type="molecule type" value="mRNA"/>
</dbReference>
<dbReference type="EMBL" id="BC015308">
    <property type="protein sequence ID" value="AAH15308.1"/>
    <property type="molecule type" value="mRNA"/>
</dbReference>
<dbReference type="EMBL" id="BC062723">
    <property type="protein sequence ID" value="AAH62723.1"/>
    <property type="molecule type" value="mRNA"/>
</dbReference>
<dbReference type="EMBL" id="BC070242">
    <property type="protein sequence ID" value="AAH70242.1"/>
    <property type="molecule type" value="mRNA"/>
</dbReference>
<dbReference type="CCDS" id="CCDS34181.1">
    <molecule id="Q16637-1"/>
</dbReference>
<dbReference type="CCDS" id="CCDS34182.1">
    <molecule id="Q16637-2"/>
</dbReference>
<dbReference type="CCDS" id="CCDS4007.1">
    <molecule id="Q16637-1"/>
</dbReference>
<dbReference type="CCDS" id="CCDS4008.1">
    <molecule id="Q16637-2"/>
</dbReference>
<dbReference type="CCDS" id="CCDS54867.1">
    <molecule id="Q16637-3"/>
</dbReference>
<dbReference type="CCDS" id="CCDS75256.1">
    <molecule id="Q16637-3"/>
</dbReference>
<dbReference type="PIR" id="A55477">
    <property type="entry name" value="A55477"/>
</dbReference>
<dbReference type="RefSeq" id="NP_000335.1">
    <molecule id="Q16637-1"/>
    <property type="nucleotide sequence ID" value="NM_000344.4"/>
</dbReference>
<dbReference type="RefSeq" id="NP_001284644.1">
    <molecule id="Q16637-3"/>
    <property type="nucleotide sequence ID" value="NM_001297715.1"/>
</dbReference>
<dbReference type="RefSeq" id="NP_059107.1">
    <molecule id="Q16637-1"/>
    <property type="nucleotide sequence ID" value="NM_017411.3"/>
</dbReference>
<dbReference type="RefSeq" id="NP_075012.1">
    <molecule id="Q16637-2"/>
    <property type="nucleotide sequence ID" value="NM_022874.2"/>
</dbReference>
<dbReference type="RefSeq" id="NP_075013.1">
    <molecule id="Q16637-3"/>
    <property type="nucleotide sequence ID" value="NM_022875.2"/>
</dbReference>
<dbReference type="RefSeq" id="NP_075014.1">
    <molecule id="Q16637-2"/>
    <property type="nucleotide sequence ID" value="NM_022876.2"/>
</dbReference>
<dbReference type="RefSeq" id="NP_075015.1">
    <molecule id="Q16637-4"/>
    <property type="nucleotide sequence ID" value="NM_022877.2"/>
</dbReference>
<dbReference type="RefSeq" id="XP_016865275.1">
    <molecule id="Q16637-4"/>
    <property type="nucleotide sequence ID" value="XM_017009786.2"/>
</dbReference>
<dbReference type="RefSeq" id="XP_047273572.1">
    <molecule id="Q16637-2"/>
    <property type="nucleotide sequence ID" value="XM_047417616.1"/>
</dbReference>
<dbReference type="RefSeq" id="XP_047299248.1">
    <molecule id="Q16637-1"/>
    <property type="nucleotide sequence ID" value="XM_047443292.1"/>
</dbReference>
<dbReference type="RefSeq" id="XP_047299250.1">
    <molecule id="Q16637-3"/>
    <property type="nucleotide sequence ID" value="XM_047443294.1"/>
</dbReference>
<dbReference type="RefSeq" id="XP_047299252.1">
    <molecule id="Q16637-2"/>
    <property type="nucleotide sequence ID" value="XM_047443296.1"/>
</dbReference>
<dbReference type="RefSeq" id="XP_047299253.1">
    <molecule id="Q16637-4"/>
    <property type="nucleotide sequence ID" value="XM_047443297.1"/>
</dbReference>
<dbReference type="RefSeq" id="XP_054185517.1">
    <molecule id="Q16637-4"/>
    <property type="nucleotide sequence ID" value="XM_054329542.1"/>
</dbReference>
<dbReference type="RefSeq" id="XP_054185940.1">
    <molecule id="Q16637-4"/>
    <property type="nucleotide sequence ID" value="XM_054329965.1"/>
</dbReference>
<dbReference type="RefSeq" id="XP_054209260.1">
    <molecule id="Q16637-4"/>
    <property type="nucleotide sequence ID" value="XM_054353285.1"/>
</dbReference>
<dbReference type="PDB" id="1G5V">
    <property type="method" value="NMR"/>
    <property type="chains" value="A=90-145"/>
</dbReference>
<dbReference type="PDB" id="1MHN">
    <property type="method" value="X-ray"/>
    <property type="resolution" value="1.80 A"/>
    <property type="chains" value="A=89-147"/>
</dbReference>
<dbReference type="PDB" id="2LEH">
    <property type="method" value="NMR"/>
    <property type="chains" value="B=26-51"/>
</dbReference>
<dbReference type="PDB" id="4A4E">
    <property type="method" value="NMR"/>
    <property type="chains" value="A=84-147"/>
</dbReference>
<dbReference type="PDB" id="4A4G">
    <property type="method" value="NMR"/>
    <property type="chains" value="A=84-147"/>
</dbReference>
<dbReference type="PDB" id="4GLI">
    <property type="method" value="X-ray"/>
    <property type="resolution" value="1.90 A"/>
    <property type="chains" value="A=263-294"/>
</dbReference>
<dbReference type="PDB" id="4QQ6">
    <property type="method" value="X-ray"/>
    <property type="resolution" value="1.75 A"/>
    <property type="chains" value="A=82-147"/>
</dbReference>
<dbReference type="PDB" id="5XJL">
    <property type="method" value="X-ray"/>
    <property type="resolution" value="2.50 A"/>
    <property type="chains" value="M=26-62"/>
</dbReference>
<dbReference type="PDB" id="5XJQ">
    <property type="method" value="X-ray"/>
    <property type="resolution" value="3.28 A"/>
    <property type="chains" value="M=26-62"/>
</dbReference>
<dbReference type="PDB" id="5XJR">
    <property type="method" value="X-ray"/>
    <property type="resolution" value="3.12 A"/>
    <property type="chains" value="M=26-62"/>
</dbReference>
<dbReference type="PDB" id="5XJS">
    <property type="method" value="X-ray"/>
    <property type="resolution" value="3.38 A"/>
    <property type="chains" value="M=26-62"/>
</dbReference>
<dbReference type="PDB" id="5XJT">
    <property type="method" value="X-ray"/>
    <property type="resolution" value="2.92 A"/>
    <property type="chains" value="M=26-62"/>
</dbReference>
<dbReference type="PDB" id="5XJU">
    <property type="method" value="X-ray"/>
    <property type="resolution" value="2.58 A"/>
    <property type="chains" value="M=26-62"/>
</dbReference>
<dbReference type="PDB" id="7W2P">
    <property type="method" value="X-ray"/>
    <property type="resolution" value="1.15 A"/>
    <property type="chains" value="A=82-147"/>
</dbReference>
<dbReference type="PDB" id="7W30">
    <property type="method" value="X-ray"/>
    <property type="resolution" value="1.80 A"/>
    <property type="chains" value="A/B/C/D=82-147"/>
</dbReference>
<dbReference type="PDBsum" id="1G5V"/>
<dbReference type="PDBsum" id="1MHN"/>
<dbReference type="PDBsum" id="2LEH"/>
<dbReference type="PDBsum" id="4A4E"/>
<dbReference type="PDBsum" id="4A4G"/>
<dbReference type="PDBsum" id="4GLI"/>
<dbReference type="PDBsum" id="4QQ6"/>
<dbReference type="PDBsum" id="5XJL"/>
<dbReference type="PDBsum" id="5XJQ"/>
<dbReference type="PDBsum" id="5XJR"/>
<dbReference type="PDBsum" id="5XJS"/>
<dbReference type="PDBsum" id="5XJT"/>
<dbReference type="PDBsum" id="5XJU"/>
<dbReference type="PDBsum" id="7W2P"/>
<dbReference type="PDBsum" id="7W30"/>
<dbReference type="BMRB" id="Q16637"/>
<dbReference type="SMR" id="Q16637"/>
<dbReference type="BioGRID" id="112490">
    <property type="interactions" value="306"/>
</dbReference>
<dbReference type="BioGRID" id="112491">
    <property type="interactions" value="91"/>
</dbReference>
<dbReference type="ComplexPortal" id="CPX-6031">
    <property type="entry name" value="Survival motor neuron complex"/>
</dbReference>
<dbReference type="CORUM" id="Q16637"/>
<dbReference type="DIP" id="DIP-31309N"/>
<dbReference type="FunCoup" id="Q16637">
    <property type="interactions" value="889"/>
</dbReference>
<dbReference type="IntAct" id="Q16637">
    <property type="interactions" value="274"/>
</dbReference>
<dbReference type="MINT" id="Q16637"/>
<dbReference type="STRING" id="9606.ENSP00000370083"/>
<dbReference type="BindingDB" id="Q16637"/>
<dbReference type="ChEMBL" id="CHEMBL1293232"/>
<dbReference type="DrugBank" id="DB14918">
    <property type="generic name" value="Branaplam"/>
</dbReference>
<dbReference type="GlyGen" id="Q16637">
    <property type="glycosylation" value="1 site, 1 O-linked glycan (1 site)"/>
</dbReference>
<dbReference type="iPTMnet" id="Q16637"/>
<dbReference type="PhosphoSitePlus" id="Q16637"/>
<dbReference type="BioMuta" id="SMN1"/>
<dbReference type="DMDM" id="2498924"/>
<dbReference type="jPOST" id="Q16637"/>
<dbReference type="MassIVE" id="Q16637"/>
<dbReference type="PaxDb" id="9606-ENSP00000370083"/>
<dbReference type="PeptideAtlas" id="Q16637"/>
<dbReference type="ProteomicsDB" id="60992">
    <molecule id="Q16637-1"/>
</dbReference>
<dbReference type="ProteomicsDB" id="60993">
    <molecule id="Q16637-2"/>
</dbReference>
<dbReference type="ProteomicsDB" id="60994">
    <molecule id="Q16637-3"/>
</dbReference>
<dbReference type="ProteomicsDB" id="60995">
    <molecule id="Q16637-4"/>
</dbReference>
<dbReference type="Pumba" id="Q16637"/>
<dbReference type="Antibodypedia" id="12087">
    <property type="antibodies" value="384 antibodies from 23 providers"/>
</dbReference>
<dbReference type="Antibodypedia" id="3991">
    <property type="antibodies" value="327 antibodies from 37 providers"/>
</dbReference>
<dbReference type="DNASU" id="6606"/>
<dbReference type="Ensembl" id="ENST00000351205.8">
    <molecule id="Q16637-1"/>
    <property type="protein sequence ID" value="ENSP00000305857.5"/>
    <property type="gene ID" value="ENSG00000172062.17"/>
</dbReference>
<dbReference type="Ensembl" id="ENST00000380707.9">
    <molecule id="Q16637-1"/>
    <property type="protein sequence ID" value="ENSP00000370083.4"/>
    <property type="gene ID" value="ENSG00000172062.17"/>
</dbReference>
<dbReference type="Ensembl" id="ENST00000380741.8">
    <molecule id="Q16637-1"/>
    <property type="protein sequence ID" value="ENSP00000370117.5"/>
    <property type="gene ID" value="ENSG00000205571.15"/>
</dbReference>
<dbReference type="Ensembl" id="ENST00000380742.8">
    <molecule id="Q16637-2"/>
    <property type="protein sequence ID" value="ENSP00000370118.4"/>
    <property type="gene ID" value="ENSG00000205571.15"/>
</dbReference>
<dbReference type="Ensembl" id="ENST00000380743.9">
    <molecule id="Q16637-1"/>
    <property type="protein sequence ID" value="ENSP00000370119.4"/>
    <property type="gene ID" value="ENSG00000205571.15"/>
</dbReference>
<dbReference type="Ensembl" id="ENST00000503079.6">
    <molecule id="Q16637-2"/>
    <property type="protein sequence ID" value="ENSP00000428128.1"/>
    <property type="gene ID" value="ENSG00000172062.17"/>
</dbReference>
<dbReference type="Ensembl" id="ENST00000506163.5">
    <molecule id="Q16637-3"/>
    <property type="protein sequence ID" value="ENSP00000424926.1"/>
    <property type="gene ID" value="ENSG00000172062.17"/>
</dbReference>
<dbReference type="Ensembl" id="ENST00000611442.4">
    <molecule id="Q16637-2"/>
    <property type="protein sequence ID" value="ENSP00000483768.1"/>
    <property type="gene ID" value="ENSG00000277773.4"/>
</dbReference>
<dbReference type="Ensembl" id="ENST00000614240.4">
    <molecule id="Q16637-2"/>
    <property type="protein sequence ID" value="ENSP00000479279.1"/>
    <property type="gene ID" value="ENSG00000205571.15"/>
</dbReference>
<dbReference type="Ensembl" id="ENST00000614610.2">
    <molecule id="Q16637-1"/>
    <property type="protein sequence ID" value="ENSP00000479920.1"/>
    <property type="gene ID" value="ENSG00000273772.4"/>
</dbReference>
<dbReference type="Ensembl" id="ENST00000614773.4">
    <molecule id="Q16637-2"/>
    <property type="protein sequence ID" value="ENSP00000481427.1"/>
    <property type="gene ID" value="ENSG00000273772.4"/>
</dbReference>
<dbReference type="Ensembl" id="ENST00000618251.4">
    <molecule id="Q16637-1"/>
    <property type="protein sequence ID" value="ENSP00000483515.1"/>
    <property type="gene ID" value="ENSG00000277773.4"/>
</dbReference>
<dbReference type="Ensembl" id="ENST00000618661.2">
    <molecule id="Q16637-1"/>
    <property type="protein sequence ID" value="ENSP00000483819.1"/>
    <property type="gene ID" value="ENSG00000277773.4"/>
</dbReference>
<dbReference type="Ensembl" id="ENST00000622158.4">
    <molecule id="Q16637-2"/>
    <property type="protein sequence ID" value="ENSP00000480906.1"/>
    <property type="gene ID" value="ENSG00000275349.4"/>
</dbReference>
<dbReference type="Ensembl" id="ENST00000622739.2">
    <molecule id="Q16637-1"/>
    <property type="protein sequence ID" value="ENSP00000482966.1"/>
    <property type="gene ID" value="ENSG00000275349.4"/>
</dbReference>
<dbReference type="Ensembl" id="ENST00000624634.3">
    <molecule id="Q16637-2"/>
    <property type="protein sequence ID" value="ENSP00000485595.1"/>
    <property type="gene ID" value="ENSG00000277773.4"/>
</dbReference>
<dbReference type="Ensembl" id="ENST00000626847.2">
    <molecule id="Q16637-3"/>
    <property type="protein sequence ID" value="ENSP00000486152.1"/>
    <property type="gene ID" value="ENSG00000205571.15"/>
</dbReference>
<dbReference type="Ensembl" id="ENST00000627341.2">
    <molecule id="Q16637-1"/>
    <property type="protein sequence ID" value="ENSP00000487421.1"/>
    <property type="gene ID" value="ENSG00000273772.4"/>
</dbReference>
<dbReference type="Ensembl" id="ENST00000628353.2">
    <molecule id="Q16637-3"/>
    <property type="protein sequence ID" value="ENSP00000487029.1"/>
    <property type="gene ID" value="ENSG00000275349.4"/>
</dbReference>
<dbReference type="Ensembl" id="ENST00000628642.2">
    <molecule id="Q16637-3"/>
    <property type="protein sequence ID" value="ENSP00000487015.1"/>
    <property type="gene ID" value="ENSG00000273772.4"/>
</dbReference>
<dbReference type="Ensembl" id="ENST00000629122.2">
    <molecule id="Q16637-1"/>
    <property type="protein sequence ID" value="ENSP00000487206.1"/>
    <property type="gene ID" value="ENSG00000275349.4"/>
</dbReference>
<dbReference type="GeneID" id="6606"/>
<dbReference type="GeneID" id="6607"/>
<dbReference type="KEGG" id="hsa:6606"/>
<dbReference type="KEGG" id="hsa:6607"/>
<dbReference type="MANE-Select" id="ENST00000380707.9">
    <property type="protein sequence ID" value="ENSP00000370083.4"/>
    <property type="RefSeq nucleotide sequence ID" value="NM_000344.4"/>
    <property type="RefSeq protein sequence ID" value="NP_000335.1"/>
</dbReference>
<dbReference type="MANE-Select" id="ENST00000380743.9">
    <property type="protein sequence ID" value="ENSP00000370119.4"/>
    <property type="RefSeq nucleotide sequence ID" value="NM_017411.4"/>
    <property type="RefSeq protein sequence ID" value="NP_059107.1"/>
</dbReference>
<dbReference type="UCSC" id="uc003jyd.4">
    <molecule id="Q16637-1"/>
    <property type="organism name" value="human"/>
</dbReference>
<dbReference type="AGR" id="HGNC:11117"/>
<dbReference type="AGR" id="HGNC:11118"/>
<dbReference type="CTD" id="6606"/>
<dbReference type="CTD" id="6607"/>
<dbReference type="DisGeNET" id="6606"/>
<dbReference type="DisGeNET" id="6607"/>
<dbReference type="GeneCards" id="SMN1"/>
<dbReference type="GeneCards" id="SMN2"/>
<dbReference type="GeneReviews" id="SMN1"/>
<dbReference type="GeneReviews" id="SMN2"/>
<dbReference type="HGNC" id="HGNC:11117">
    <property type="gene designation" value="SMN1"/>
</dbReference>
<dbReference type="HGNC" id="HGNC:11118">
    <property type="gene designation" value="SMN2"/>
</dbReference>
<dbReference type="HPA" id="ENSG00000172062">
    <property type="expression patterns" value="Low tissue specificity"/>
</dbReference>
<dbReference type="HPA" id="ENSG00000205571">
    <property type="expression patterns" value="Low tissue specificity"/>
</dbReference>
<dbReference type="MalaCards" id="SMN1"/>
<dbReference type="MalaCards" id="SMN2"/>
<dbReference type="MIM" id="253300">
    <property type="type" value="phenotype"/>
</dbReference>
<dbReference type="MIM" id="253400">
    <property type="type" value="phenotype"/>
</dbReference>
<dbReference type="MIM" id="253550">
    <property type="type" value="phenotype"/>
</dbReference>
<dbReference type="MIM" id="271150">
    <property type="type" value="phenotype"/>
</dbReference>
<dbReference type="MIM" id="600354">
    <property type="type" value="gene"/>
</dbReference>
<dbReference type="MIM" id="601627">
    <property type="type" value="gene"/>
</dbReference>
<dbReference type="neXtProt" id="NX_Q16637"/>
<dbReference type="OpenTargets" id="ENSG00000172062"/>
<dbReference type="OpenTargets" id="ENSG00000205571"/>
<dbReference type="Orphanet" id="83330">
    <property type="disease" value="Proximal spinal muscular atrophy type 1"/>
</dbReference>
<dbReference type="Orphanet" id="83418">
    <property type="disease" value="Proximal spinal muscular atrophy type 2"/>
</dbReference>
<dbReference type="Orphanet" id="83419">
    <property type="disease" value="Proximal spinal muscular atrophy type 3"/>
</dbReference>
<dbReference type="Orphanet" id="83420">
    <property type="disease" value="Proximal spinal muscular atrophy type 4"/>
</dbReference>
<dbReference type="PharmGKB" id="PA35967"/>
<dbReference type="VEuPathDB" id="HostDB:ENSG00000172062"/>
<dbReference type="VEuPathDB" id="HostDB:ENSG00000205571"/>
<dbReference type="eggNOG" id="KOG4327">
    <property type="taxonomic scope" value="Eukaryota"/>
</dbReference>
<dbReference type="GeneTree" id="ENSGT00940000153352"/>
<dbReference type="HOGENOM" id="CLU_077852_0_0_1"/>
<dbReference type="InParanoid" id="Q16637"/>
<dbReference type="OMA" id="DETVNGM"/>
<dbReference type="OrthoDB" id="197400at2759"/>
<dbReference type="PAN-GO" id="Q16637">
    <property type="GO annotations" value="5 GO annotations based on evolutionary models"/>
</dbReference>
<dbReference type="PhylomeDB" id="Q16637"/>
<dbReference type="TreeFam" id="TF318390"/>
<dbReference type="PathwayCommons" id="Q16637"/>
<dbReference type="Reactome" id="R-HSA-191859">
    <property type="pathway name" value="snRNP Assembly"/>
</dbReference>
<dbReference type="Reactome" id="R-HSA-9754678">
    <property type="pathway name" value="SARS-CoV-2 modulates host translation machinery"/>
</dbReference>
<dbReference type="SignaLink" id="Q16637"/>
<dbReference type="SIGNOR" id="Q16637"/>
<dbReference type="BioGRID-ORCS" id="6606">
    <property type="hits" value="42 hits in 296 CRISPR screens"/>
</dbReference>
<dbReference type="BioGRID-ORCS" id="6607">
    <property type="hits" value="411 hits in 659 CRISPR screens"/>
</dbReference>
<dbReference type="CD-CODE" id="232F8A39">
    <property type="entry name" value="P-body"/>
</dbReference>
<dbReference type="CD-CODE" id="6F24707C">
    <property type="entry name" value="Cajal body"/>
</dbReference>
<dbReference type="CD-CODE" id="91E14AE1">
    <property type="entry name" value="U-body"/>
</dbReference>
<dbReference type="CD-CODE" id="DEE660B4">
    <property type="entry name" value="Stress granule"/>
</dbReference>
<dbReference type="ChiTaRS" id="SMN1">
    <property type="organism name" value="human"/>
</dbReference>
<dbReference type="ChiTaRS" id="SMN2">
    <property type="organism name" value="human"/>
</dbReference>
<dbReference type="EvolutionaryTrace" id="Q16637"/>
<dbReference type="GeneWiki" id="SMN1"/>
<dbReference type="GeneWiki" id="SMN2"/>
<dbReference type="Pharos" id="Q16637">
    <property type="development level" value="Tchem"/>
</dbReference>
<dbReference type="PRO" id="PR:Q16637"/>
<dbReference type="Proteomes" id="UP000005640">
    <property type="component" value="Chromosome 5"/>
</dbReference>
<dbReference type="RNAct" id="Q16637">
    <property type="molecule type" value="protein"/>
</dbReference>
<dbReference type="Bgee" id="ENSG00000172062">
    <property type="expression patterns" value="Expressed in ventricular zone and 98 other cell types or tissues"/>
</dbReference>
<dbReference type="ExpressionAtlas" id="Q16637">
    <property type="expression patterns" value="baseline and differential"/>
</dbReference>
<dbReference type="GO" id="GO:0030424">
    <property type="term" value="C:axon"/>
    <property type="evidence" value="ECO:0007669"/>
    <property type="project" value="UniProtKB-SubCell"/>
</dbReference>
<dbReference type="GO" id="GO:0015030">
    <property type="term" value="C:Cajal body"/>
    <property type="evidence" value="ECO:0000314"/>
    <property type="project" value="UniProtKB"/>
</dbReference>
<dbReference type="GO" id="GO:0005737">
    <property type="term" value="C:cytoplasm"/>
    <property type="evidence" value="ECO:0000314"/>
    <property type="project" value="UniProtKB"/>
</dbReference>
<dbReference type="GO" id="GO:0036464">
    <property type="term" value="C:cytoplasmic ribonucleoprotein granule"/>
    <property type="evidence" value="ECO:0000314"/>
    <property type="project" value="UniProtKB"/>
</dbReference>
<dbReference type="GO" id="GO:0005829">
    <property type="term" value="C:cytosol"/>
    <property type="evidence" value="ECO:0000314"/>
    <property type="project" value="HPA"/>
</dbReference>
<dbReference type="GO" id="GO:0097504">
    <property type="term" value="C:Gemini of Cajal bodies"/>
    <property type="evidence" value="ECO:0000314"/>
    <property type="project" value="UniProtKB"/>
</dbReference>
<dbReference type="GO" id="GO:0043005">
    <property type="term" value="C:neuron projection"/>
    <property type="evidence" value="ECO:0000314"/>
    <property type="project" value="UniProtKB"/>
</dbReference>
<dbReference type="GO" id="GO:0016604">
    <property type="term" value="C:nuclear body"/>
    <property type="evidence" value="ECO:0000314"/>
    <property type="project" value="HPA"/>
</dbReference>
<dbReference type="GO" id="GO:0005654">
    <property type="term" value="C:nucleoplasm"/>
    <property type="evidence" value="ECO:0000314"/>
    <property type="project" value="UniProtKB"/>
</dbReference>
<dbReference type="GO" id="GO:0005634">
    <property type="term" value="C:nucleus"/>
    <property type="evidence" value="ECO:0000314"/>
    <property type="project" value="UniProtKB"/>
</dbReference>
<dbReference type="GO" id="GO:0043204">
    <property type="term" value="C:perikaryon"/>
    <property type="evidence" value="ECO:0000314"/>
    <property type="project" value="UniProtKB"/>
</dbReference>
<dbReference type="GO" id="GO:0032797">
    <property type="term" value="C:SMN complex"/>
    <property type="evidence" value="ECO:0000314"/>
    <property type="project" value="UniProtKB"/>
</dbReference>
<dbReference type="GO" id="GO:0034719">
    <property type="term" value="C:SMN-Sm protein complex"/>
    <property type="evidence" value="ECO:0000314"/>
    <property type="project" value="UniProtKB"/>
</dbReference>
<dbReference type="GO" id="GO:0030018">
    <property type="term" value="C:Z disc"/>
    <property type="evidence" value="ECO:0007669"/>
    <property type="project" value="UniProtKB-SubCell"/>
</dbReference>
<dbReference type="GO" id="GO:0042802">
    <property type="term" value="F:identical protein binding"/>
    <property type="evidence" value="ECO:0000353"/>
    <property type="project" value="IntAct"/>
</dbReference>
<dbReference type="GO" id="GO:0003723">
    <property type="term" value="F:RNA binding"/>
    <property type="evidence" value="ECO:0007669"/>
    <property type="project" value="UniProtKB-KW"/>
</dbReference>
<dbReference type="GO" id="GO:0006353">
    <property type="term" value="P:DNA-templated transcription termination"/>
    <property type="evidence" value="ECO:0000315"/>
    <property type="project" value="UniProtKB"/>
</dbReference>
<dbReference type="GO" id="GO:0007399">
    <property type="term" value="P:nervous system development"/>
    <property type="evidence" value="ECO:0007669"/>
    <property type="project" value="UniProtKB-KW"/>
</dbReference>
<dbReference type="GO" id="GO:0000245">
    <property type="term" value="P:spliceosomal complex assembly"/>
    <property type="evidence" value="ECO:0000315"/>
    <property type="project" value="UniProtKB"/>
</dbReference>
<dbReference type="GO" id="GO:0000387">
    <property type="term" value="P:spliceosomal snRNP assembly"/>
    <property type="evidence" value="ECO:0000314"/>
    <property type="project" value="UniProtKB"/>
</dbReference>
<dbReference type="CDD" id="cd22852">
    <property type="entry name" value="SMN_C"/>
    <property type="match status" value="1"/>
</dbReference>
<dbReference type="CDD" id="cd22851">
    <property type="entry name" value="SMN_N"/>
    <property type="match status" value="1"/>
</dbReference>
<dbReference type="CDD" id="cd20398">
    <property type="entry name" value="Tudor_SMN"/>
    <property type="match status" value="1"/>
</dbReference>
<dbReference type="FunFam" id="3.40.190.10:FF:000110">
    <property type="entry name" value="Survival motor neuron protein 1"/>
    <property type="match status" value="1"/>
</dbReference>
<dbReference type="FunFam" id="2.30.30.140:FF:000038">
    <property type="entry name" value="Survival of motor neuron-related-splicing factor 30"/>
    <property type="match status" value="1"/>
</dbReference>
<dbReference type="Gene3D" id="2.30.30.140">
    <property type="match status" value="1"/>
</dbReference>
<dbReference type="Gene3D" id="3.40.190.10">
    <property type="entry name" value="Periplasmic binding protein-like II"/>
    <property type="match status" value="1"/>
</dbReference>
<dbReference type="IDEAL" id="IID00569"/>
<dbReference type="InterPro" id="IPR040424">
    <property type="entry name" value="Smn1"/>
</dbReference>
<dbReference type="InterPro" id="IPR047313">
    <property type="entry name" value="SMN_C"/>
</dbReference>
<dbReference type="InterPro" id="IPR049481">
    <property type="entry name" value="SMN_G2-BD"/>
</dbReference>
<dbReference type="InterPro" id="IPR010304">
    <property type="entry name" value="SMN_Tudor"/>
</dbReference>
<dbReference type="InterPro" id="IPR002999">
    <property type="entry name" value="Tudor"/>
</dbReference>
<dbReference type="InterPro" id="IPR047298">
    <property type="entry name" value="Tudor_SMN_eumet"/>
</dbReference>
<dbReference type="PANTHER" id="PTHR39267:SF1">
    <property type="entry name" value="SURVIVAL MOTOR NEURON PROTEIN"/>
    <property type="match status" value="1"/>
</dbReference>
<dbReference type="PANTHER" id="PTHR39267">
    <property type="entry name" value="SURVIVAL MOTOR NEURON-LIKE PROTEIN 1"/>
    <property type="match status" value="1"/>
</dbReference>
<dbReference type="Pfam" id="PF20636">
    <property type="entry name" value="SMN_G2-BD"/>
    <property type="match status" value="1"/>
</dbReference>
<dbReference type="Pfam" id="PF06003">
    <property type="entry name" value="SMN_Tudor"/>
    <property type="match status" value="1"/>
</dbReference>
<dbReference type="Pfam" id="PF20635">
    <property type="entry name" value="SMN_YG-box"/>
    <property type="match status" value="1"/>
</dbReference>
<dbReference type="SMART" id="SM00333">
    <property type="entry name" value="TUDOR"/>
    <property type="match status" value="1"/>
</dbReference>
<dbReference type="SUPFAM" id="SSF63748">
    <property type="entry name" value="Tudor/PWWP/MBT"/>
    <property type="match status" value="1"/>
</dbReference>
<dbReference type="PROSITE" id="PS50304">
    <property type="entry name" value="TUDOR"/>
    <property type="match status" value="1"/>
</dbReference>
<sequence length="294" mass="31849">MAMSSGGSGGGVPEQEDSVLFRRGTGQSDDSDIWDDTALIKAYDKAVASFKHALKNGDICETSGKPKTTPKRKPAKKNKSQKKNTAASLQQWKVGDKCSAIWSEDGCIYPATIASIDFKRETCVVVYTGYGNREEQNLSDLLSPICEVANNIEQNAQENENESQVSTDESENSRSPGNKSDNIKPKSAPWNSFLPPPPPMPGPRLGPGKPGLKFNGPPPPPPPPPPHLLSCWLPPFPSGPPIIPPPPPICPDSLDDADALGSMLISWYMSGYHTGYYMGFRQNQKEGRCSHSLN</sequence>
<proteinExistence type="evidence at protein level"/>
<name>SMN_HUMAN</name>
<accession>Q16637</accession>
<accession>A8K0V4</accession>
<accession>Q13119</accession>
<accession>Q549U5</accession>
<accession>Q96J51</accession>
<evidence type="ECO:0000250" key="1">
    <source>
        <dbReference type="UniProtKB" id="P97801"/>
    </source>
</evidence>
<evidence type="ECO:0000255" key="2">
    <source>
        <dbReference type="PROSITE-ProRule" id="PRU00211"/>
    </source>
</evidence>
<evidence type="ECO:0000256" key="3">
    <source>
        <dbReference type="SAM" id="MobiDB-lite"/>
    </source>
</evidence>
<evidence type="ECO:0000269" key="4">
    <source>
    </source>
</evidence>
<evidence type="ECO:0000269" key="5">
    <source>
    </source>
</evidence>
<evidence type="ECO:0000269" key="6">
    <source>
    </source>
</evidence>
<evidence type="ECO:0000269" key="7">
    <source>
    </source>
</evidence>
<evidence type="ECO:0000269" key="8">
    <source>
    </source>
</evidence>
<evidence type="ECO:0000269" key="9">
    <source>
    </source>
</evidence>
<evidence type="ECO:0000269" key="10">
    <source>
    </source>
</evidence>
<evidence type="ECO:0000269" key="11">
    <source>
    </source>
</evidence>
<evidence type="ECO:0000269" key="12">
    <source>
    </source>
</evidence>
<evidence type="ECO:0000269" key="13">
    <source>
    </source>
</evidence>
<evidence type="ECO:0000269" key="14">
    <source>
    </source>
</evidence>
<evidence type="ECO:0000269" key="15">
    <source>
    </source>
</evidence>
<evidence type="ECO:0000269" key="16">
    <source>
    </source>
</evidence>
<evidence type="ECO:0000269" key="17">
    <source>
    </source>
</evidence>
<evidence type="ECO:0000269" key="18">
    <source>
    </source>
</evidence>
<evidence type="ECO:0000269" key="19">
    <source>
    </source>
</evidence>
<evidence type="ECO:0000269" key="20">
    <source>
    </source>
</evidence>
<evidence type="ECO:0000269" key="21">
    <source>
    </source>
</evidence>
<evidence type="ECO:0000269" key="22">
    <source>
    </source>
</evidence>
<evidence type="ECO:0000269" key="23">
    <source>
    </source>
</evidence>
<evidence type="ECO:0000269" key="24">
    <source>
    </source>
</evidence>
<evidence type="ECO:0000269" key="25">
    <source>
    </source>
</evidence>
<evidence type="ECO:0000269" key="26">
    <source>
    </source>
</evidence>
<evidence type="ECO:0000269" key="27">
    <source>
    </source>
</evidence>
<evidence type="ECO:0000269" key="28">
    <source>
    </source>
</evidence>
<evidence type="ECO:0000269" key="29">
    <source>
    </source>
</evidence>
<evidence type="ECO:0000269" key="30">
    <source>
    </source>
</evidence>
<evidence type="ECO:0000269" key="31">
    <source>
    </source>
</evidence>
<evidence type="ECO:0000269" key="32">
    <source>
    </source>
</evidence>
<evidence type="ECO:0000269" key="33">
    <source>
    </source>
</evidence>
<evidence type="ECO:0000269" key="34">
    <source>
    </source>
</evidence>
<evidence type="ECO:0000269" key="35">
    <source>
    </source>
</evidence>
<evidence type="ECO:0000269" key="36">
    <source>
    </source>
</evidence>
<evidence type="ECO:0000269" key="37">
    <source>
    </source>
</evidence>
<evidence type="ECO:0000269" key="38">
    <source>
    </source>
</evidence>
<evidence type="ECO:0000269" key="39">
    <source>
    </source>
</evidence>
<evidence type="ECO:0000269" key="40">
    <source>
    </source>
</evidence>
<evidence type="ECO:0000269" key="41">
    <source>
    </source>
</evidence>
<evidence type="ECO:0000269" key="42">
    <source>
    </source>
</evidence>
<evidence type="ECO:0000269" key="43">
    <source>
    </source>
</evidence>
<evidence type="ECO:0000269" key="44">
    <source>
    </source>
</evidence>
<evidence type="ECO:0000269" key="45">
    <source>
    </source>
</evidence>
<evidence type="ECO:0000269" key="46">
    <source>
    </source>
</evidence>
<evidence type="ECO:0000269" key="47">
    <source>
    </source>
</evidence>
<evidence type="ECO:0000269" key="48">
    <source>
    </source>
</evidence>
<evidence type="ECO:0000269" key="49">
    <source>
    </source>
</evidence>
<evidence type="ECO:0000303" key="50">
    <source>
    </source>
</evidence>
<evidence type="ECO:0000303" key="51">
    <source>
    </source>
</evidence>
<evidence type="ECO:0000305" key="52"/>
<evidence type="ECO:0000305" key="53">
    <source>
    </source>
</evidence>
<evidence type="ECO:0000305" key="54">
    <source>
    </source>
</evidence>
<evidence type="ECO:0007744" key="55">
    <source>
        <dbReference type="PDB" id="1G5V"/>
    </source>
</evidence>
<evidence type="ECO:0007744" key="56">
    <source>
        <dbReference type="PDB" id="1MHN"/>
    </source>
</evidence>
<evidence type="ECO:0007744" key="57">
    <source>
        <dbReference type="PDB" id="2LEH"/>
    </source>
</evidence>
<evidence type="ECO:0007744" key="58">
    <source>
        <dbReference type="PDB" id="4A4E"/>
    </source>
</evidence>
<evidence type="ECO:0007744" key="59">
    <source>
        <dbReference type="PDB" id="4A4G"/>
    </source>
</evidence>
<evidence type="ECO:0007744" key="60">
    <source>
        <dbReference type="PDB" id="4GLI"/>
    </source>
</evidence>
<evidence type="ECO:0007744" key="61">
    <source>
        <dbReference type="PDB" id="5XJL"/>
    </source>
</evidence>
<evidence type="ECO:0007744" key="62">
    <source>
        <dbReference type="PDB" id="5XJQ"/>
    </source>
</evidence>
<evidence type="ECO:0007744" key="63">
    <source>
        <dbReference type="PDB" id="5XJR"/>
    </source>
</evidence>
<evidence type="ECO:0007744" key="64">
    <source>
        <dbReference type="PDB" id="5XJS"/>
    </source>
</evidence>
<evidence type="ECO:0007744" key="65">
    <source>
    </source>
</evidence>
<evidence type="ECO:0007744" key="66">
    <source>
    </source>
</evidence>
<evidence type="ECO:0007744" key="67">
    <source>
    </source>
</evidence>
<evidence type="ECO:0007744" key="68">
    <source>
    </source>
</evidence>
<evidence type="ECO:0007744" key="69">
    <source>
    </source>
</evidence>
<evidence type="ECO:0007744" key="70">
    <source>
    </source>
</evidence>
<evidence type="ECO:0007744" key="71">
    <source>
    </source>
</evidence>
<evidence type="ECO:0007744" key="72">
    <source>
    </source>
</evidence>
<evidence type="ECO:0007744" key="73">
    <source>
    </source>
</evidence>
<evidence type="ECO:0007744" key="74">
    <source>
    </source>
</evidence>
<evidence type="ECO:0007744" key="75">
    <source>
    </source>
</evidence>
<evidence type="ECO:0007744" key="76">
    <source>
    </source>
</evidence>
<evidence type="ECO:0007744" key="77">
    <source>
    </source>
</evidence>
<evidence type="ECO:0007744" key="78">
    <source>
    </source>
</evidence>
<evidence type="ECO:0007829" key="79">
    <source>
        <dbReference type="PDB" id="4GLI"/>
    </source>
</evidence>
<evidence type="ECO:0007829" key="80">
    <source>
        <dbReference type="PDB" id="5XJL"/>
    </source>
</evidence>
<evidence type="ECO:0007829" key="81">
    <source>
        <dbReference type="PDB" id="7W2P"/>
    </source>
</evidence>
<gene>
    <name type="primary">SMN1</name>
    <name type="synonym">SMN</name>
    <name type="synonym">SMNT</name>
</gene>
<gene>
    <name type="primary">SMN2</name>
    <name type="synonym">SMNC</name>
</gene>